<name>HXA1_HUMAN</name>
<dbReference type="EMBL" id="U10421">
    <property type="protein sequence ID" value="AAA86954.1"/>
    <property type="molecule type" value="mRNA"/>
</dbReference>
<dbReference type="EMBL" id="AK313514">
    <property type="protein sequence ID" value="BAG36294.1"/>
    <property type="molecule type" value="mRNA"/>
</dbReference>
<dbReference type="EMBL" id="CH236948">
    <property type="protein sequence ID" value="EAL24228.1"/>
    <property type="molecule type" value="Genomic_DNA"/>
</dbReference>
<dbReference type="EMBL" id="CH471073">
    <property type="protein sequence ID" value="EAW93861.1"/>
    <property type="molecule type" value="Genomic_DNA"/>
</dbReference>
<dbReference type="EMBL" id="AC004079">
    <property type="status" value="NOT_ANNOTATED_CDS"/>
    <property type="molecule type" value="Genomic_DNA"/>
</dbReference>
<dbReference type="EMBL" id="BC032547">
    <property type="protein sequence ID" value="AAH32547.1"/>
    <property type="molecule type" value="mRNA"/>
</dbReference>
<dbReference type="EMBL" id="U37431">
    <property type="protein sequence ID" value="AAC50248.1"/>
    <property type="molecule type" value="mRNA"/>
</dbReference>
<dbReference type="EMBL" id="U37431">
    <property type="protein sequence ID" value="AAC50249.1"/>
    <property type="molecule type" value="mRNA"/>
</dbReference>
<dbReference type="EMBL" id="U37431">
    <property type="protein sequence ID" value="AAC50250.1"/>
    <property type="molecule type" value="mRNA"/>
</dbReference>
<dbReference type="EMBL" id="S79869">
    <property type="protein sequence ID" value="AAB35424.2"/>
    <property type="molecule type" value="mRNA"/>
</dbReference>
<dbReference type="EMBL" id="S79871">
    <property type="protein sequence ID" value="AAB35425.1"/>
    <property type="molecule type" value="mRNA"/>
</dbReference>
<dbReference type="EMBL" id="S79910">
    <property type="protein sequence ID" value="AAB35423.2"/>
    <property type="molecule type" value="mRNA"/>
</dbReference>
<dbReference type="CCDS" id="CCDS5401.1">
    <molecule id="P49639-1"/>
</dbReference>
<dbReference type="CCDS" id="CCDS5402.2">
    <molecule id="P49639-2"/>
</dbReference>
<dbReference type="PIR" id="G01448">
    <property type="entry name" value="G01448"/>
</dbReference>
<dbReference type="RefSeq" id="NP_005513.2">
    <molecule id="P49639-1"/>
    <property type="nucleotide sequence ID" value="NM_005522.5"/>
</dbReference>
<dbReference type="RefSeq" id="NP_705873.3">
    <molecule id="P49639-2"/>
    <property type="nucleotide sequence ID" value="NM_153620.3"/>
</dbReference>
<dbReference type="SMR" id="P49639"/>
<dbReference type="BioGRID" id="109438">
    <property type="interactions" value="353"/>
</dbReference>
<dbReference type="ELM" id="P49639"/>
<dbReference type="FunCoup" id="P49639">
    <property type="interactions" value="1670"/>
</dbReference>
<dbReference type="IntAct" id="P49639">
    <property type="interactions" value="332"/>
</dbReference>
<dbReference type="MINT" id="P49639"/>
<dbReference type="STRING" id="9606.ENSP00000494260"/>
<dbReference type="iPTMnet" id="P49639"/>
<dbReference type="PhosphoSitePlus" id="P49639"/>
<dbReference type="BioMuta" id="HOXA1"/>
<dbReference type="DMDM" id="6166216"/>
<dbReference type="jPOST" id="P49639"/>
<dbReference type="MassIVE" id="P49639"/>
<dbReference type="PaxDb" id="9606-ENSP00000343246"/>
<dbReference type="PeptideAtlas" id="P49639"/>
<dbReference type="ProteomicsDB" id="56033">
    <molecule id="P49639-1"/>
</dbReference>
<dbReference type="ProteomicsDB" id="56034">
    <molecule id="P49639-2"/>
</dbReference>
<dbReference type="ProteomicsDB" id="56035">
    <molecule id="P49639-3"/>
</dbReference>
<dbReference type="Antibodypedia" id="1429">
    <property type="antibodies" value="333 antibodies from 31 providers"/>
</dbReference>
<dbReference type="DNASU" id="3198"/>
<dbReference type="Ensembl" id="ENST00000355633.5">
    <molecule id="P49639-2"/>
    <property type="protein sequence ID" value="ENSP00000347851.5"/>
    <property type="gene ID" value="ENSG00000105991.10"/>
</dbReference>
<dbReference type="Ensembl" id="ENST00000643460.2">
    <molecule id="P49639-1"/>
    <property type="protein sequence ID" value="ENSP00000494260.2"/>
    <property type="gene ID" value="ENSG00000105991.10"/>
</dbReference>
<dbReference type="GeneID" id="3198"/>
<dbReference type="KEGG" id="hsa:3198"/>
<dbReference type="MANE-Select" id="ENST00000643460.2">
    <property type="protein sequence ID" value="ENSP00000494260.2"/>
    <property type="RefSeq nucleotide sequence ID" value="NM_005522.5"/>
    <property type="RefSeq protein sequence ID" value="NP_005513.2"/>
</dbReference>
<dbReference type="UCSC" id="uc003sye.4">
    <molecule id="P49639-1"/>
    <property type="organism name" value="human"/>
</dbReference>
<dbReference type="AGR" id="HGNC:5099"/>
<dbReference type="CTD" id="3198"/>
<dbReference type="DisGeNET" id="3198"/>
<dbReference type="GeneCards" id="HOXA1"/>
<dbReference type="GeneReviews" id="HOXA1"/>
<dbReference type="HGNC" id="HGNC:5099">
    <property type="gene designation" value="HOXA1"/>
</dbReference>
<dbReference type="MalaCards" id="HOXA1"/>
<dbReference type="MIM" id="142955">
    <property type="type" value="gene"/>
</dbReference>
<dbReference type="MIM" id="601536">
    <property type="type" value="phenotype"/>
</dbReference>
<dbReference type="neXtProt" id="NX_P49639"/>
<dbReference type="OpenTargets" id="ENSG00000105991"/>
<dbReference type="Orphanet" id="69739">
    <property type="disease" value="Athabaskan brainstem dysgenesis syndrome"/>
</dbReference>
<dbReference type="Orphanet" id="69737">
    <property type="disease" value="Bosley-Salih-Alorainy syndrome"/>
</dbReference>
<dbReference type="PharmGKB" id="PA29376"/>
<dbReference type="VEuPathDB" id="HostDB:ENSG00000105991"/>
<dbReference type="eggNOG" id="KOG0489">
    <property type="taxonomic scope" value="Eukaryota"/>
</dbReference>
<dbReference type="GeneTree" id="ENSGT00940000157315"/>
<dbReference type="HOGENOM" id="CLU_058839_1_1_1"/>
<dbReference type="InParanoid" id="P49639"/>
<dbReference type="OMA" id="SAQTFDW"/>
<dbReference type="OrthoDB" id="6159439at2759"/>
<dbReference type="PAN-GO" id="P49639">
    <property type="GO annotations" value="4 GO annotations based on evolutionary models"/>
</dbReference>
<dbReference type="PhylomeDB" id="P49639"/>
<dbReference type="TreeFam" id="TF317730"/>
<dbReference type="PathwayCommons" id="P49639"/>
<dbReference type="Reactome" id="R-HSA-5617472">
    <property type="pathway name" value="Activation of anterior HOX genes in hindbrain development during early embryogenesis"/>
</dbReference>
<dbReference type="SignaLink" id="P49639"/>
<dbReference type="SIGNOR" id="P49639"/>
<dbReference type="BioGRID-ORCS" id="3198">
    <property type="hits" value="13 hits in 1173 CRISPR screens"/>
</dbReference>
<dbReference type="ChiTaRS" id="HOXA1">
    <property type="organism name" value="human"/>
</dbReference>
<dbReference type="GeneWiki" id="Homeobox_A1"/>
<dbReference type="GenomeRNAi" id="3198"/>
<dbReference type="Pharos" id="P49639">
    <property type="development level" value="Tbio"/>
</dbReference>
<dbReference type="PRO" id="PR:P49639"/>
<dbReference type="Proteomes" id="UP000005640">
    <property type="component" value="Chromosome 7"/>
</dbReference>
<dbReference type="RNAct" id="P49639">
    <property type="molecule type" value="protein"/>
</dbReference>
<dbReference type="Bgee" id="ENSG00000105991">
    <property type="expression patterns" value="Expressed in esophagus squamous epithelium and 96 other cell types or tissues"/>
</dbReference>
<dbReference type="GO" id="GO:0000785">
    <property type="term" value="C:chromatin"/>
    <property type="evidence" value="ECO:0000247"/>
    <property type="project" value="NTNU_SB"/>
</dbReference>
<dbReference type="GO" id="GO:0005634">
    <property type="term" value="C:nucleus"/>
    <property type="evidence" value="ECO:0000318"/>
    <property type="project" value="GO_Central"/>
</dbReference>
<dbReference type="GO" id="GO:0001228">
    <property type="term" value="F:DNA-binding transcription activator activity, RNA polymerase II-specific"/>
    <property type="evidence" value="ECO:0000314"/>
    <property type="project" value="NTNU_SB"/>
</dbReference>
<dbReference type="GO" id="GO:0000981">
    <property type="term" value="F:DNA-binding transcription factor activity, RNA polymerase II-specific"/>
    <property type="evidence" value="ECO:0000247"/>
    <property type="project" value="NTNU_SB"/>
</dbReference>
<dbReference type="GO" id="GO:0042802">
    <property type="term" value="F:identical protein binding"/>
    <property type="evidence" value="ECO:0000353"/>
    <property type="project" value="IntAct"/>
</dbReference>
<dbReference type="GO" id="GO:0000978">
    <property type="term" value="F:RNA polymerase II cis-regulatory region sequence-specific DNA binding"/>
    <property type="evidence" value="ECO:0000318"/>
    <property type="project" value="GO_Central"/>
</dbReference>
<dbReference type="GO" id="GO:0043565">
    <property type="term" value="F:sequence-specific DNA binding"/>
    <property type="evidence" value="ECO:0000314"/>
    <property type="project" value="NTNU_SB"/>
</dbReference>
<dbReference type="GO" id="GO:1990837">
    <property type="term" value="F:sequence-specific double-stranded DNA binding"/>
    <property type="evidence" value="ECO:0000314"/>
    <property type="project" value="ARUK-UCL"/>
</dbReference>
<dbReference type="GO" id="GO:0021599">
    <property type="term" value="P:abducens nerve formation"/>
    <property type="evidence" value="ECO:0000315"/>
    <property type="project" value="DFLAT"/>
</dbReference>
<dbReference type="GO" id="GO:0009653">
    <property type="term" value="P:anatomical structure morphogenesis"/>
    <property type="evidence" value="ECO:0000315"/>
    <property type="project" value="DFLAT"/>
</dbReference>
<dbReference type="GO" id="GO:0060840">
    <property type="term" value="P:artery development"/>
    <property type="evidence" value="ECO:0000315"/>
    <property type="project" value="DFLAT"/>
</dbReference>
<dbReference type="GO" id="GO:0048844">
    <property type="term" value="P:artery morphogenesis"/>
    <property type="evidence" value="ECO:0000315"/>
    <property type="project" value="DFLAT"/>
</dbReference>
<dbReference type="GO" id="GO:0090102">
    <property type="term" value="P:cochlea development"/>
    <property type="evidence" value="ECO:0000315"/>
    <property type="project" value="DFLAT"/>
</dbReference>
<dbReference type="GO" id="GO:0090103">
    <property type="term" value="P:cochlea morphogenesis"/>
    <property type="evidence" value="ECO:0000315"/>
    <property type="project" value="DFLAT"/>
</dbReference>
<dbReference type="GO" id="GO:0050890">
    <property type="term" value="P:cognition"/>
    <property type="evidence" value="ECO:0000314"/>
    <property type="project" value="DFLAT"/>
</dbReference>
<dbReference type="GO" id="GO:0048702">
    <property type="term" value="P:embryonic neurocranium morphogenesis"/>
    <property type="evidence" value="ECO:0000315"/>
    <property type="project" value="DFLAT"/>
</dbReference>
<dbReference type="GO" id="GO:0048839">
    <property type="term" value="P:inner ear development"/>
    <property type="evidence" value="ECO:0000315"/>
    <property type="project" value="DFLAT"/>
</dbReference>
<dbReference type="GO" id="GO:0050905">
    <property type="term" value="P:neuromuscular process"/>
    <property type="evidence" value="ECO:0000314"/>
    <property type="project" value="DFLAT"/>
</dbReference>
<dbReference type="GO" id="GO:0007634">
    <property type="term" value="P:optokinetic behavior"/>
    <property type="evidence" value="ECO:0000314"/>
    <property type="project" value="DFLAT"/>
</dbReference>
<dbReference type="GO" id="GO:0042473">
    <property type="term" value="P:outer ear morphogenesis"/>
    <property type="evidence" value="ECO:0000314"/>
    <property type="project" value="DFLAT"/>
</dbReference>
<dbReference type="GO" id="GO:0045944">
    <property type="term" value="P:positive regulation of transcription by RNA polymerase II"/>
    <property type="evidence" value="ECO:0000314"/>
    <property type="project" value="NTNU_SB"/>
</dbReference>
<dbReference type="GO" id="GO:0050795">
    <property type="term" value="P:regulation of behavior"/>
    <property type="evidence" value="ECO:0000314"/>
    <property type="project" value="DFLAT"/>
</dbReference>
<dbReference type="GO" id="GO:0006357">
    <property type="term" value="P:regulation of transcription by RNA polymerase II"/>
    <property type="evidence" value="ECO:0000318"/>
    <property type="project" value="GO_Central"/>
</dbReference>
<dbReference type="GO" id="GO:0060876">
    <property type="term" value="P:semicircular canal formation"/>
    <property type="evidence" value="ECO:0000315"/>
    <property type="project" value="DFLAT"/>
</dbReference>
<dbReference type="GO" id="GO:0007605">
    <property type="term" value="P:sensory perception of sound"/>
    <property type="evidence" value="ECO:0000314"/>
    <property type="project" value="DFLAT"/>
</dbReference>
<dbReference type="CDD" id="cd00086">
    <property type="entry name" value="homeodomain"/>
    <property type="match status" value="1"/>
</dbReference>
<dbReference type="FunFam" id="1.10.10.60:FF:000113">
    <property type="entry name" value="homeobox protein Hox-B1"/>
    <property type="match status" value="1"/>
</dbReference>
<dbReference type="Gene3D" id="1.10.10.60">
    <property type="entry name" value="Homeodomain-like"/>
    <property type="match status" value="1"/>
</dbReference>
<dbReference type="InterPro" id="IPR001356">
    <property type="entry name" value="HD"/>
</dbReference>
<dbReference type="InterPro" id="IPR020479">
    <property type="entry name" value="HD_metazoa"/>
</dbReference>
<dbReference type="InterPro" id="IPR017970">
    <property type="entry name" value="Homeobox_CS"/>
</dbReference>
<dbReference type="InterPro" id="IPR009057">
    <property type="entry name" value="Homeodomain-like_sf"/>
</dbReference>
<dbReference type="InterPro" id="IPR046327">
    <property type="entry name" value="HXA1/B1/D1"/>
</dbReference>
<dbReference type="PANTHER" id="PTHR45946:SF3">
    <property type="entry name" value="HOMEOBOX PROTEIN HOX-A1"/>
    <property type="match status" value="1"/>
</dbReference>
<dbReference type="PANTHER" id="PTHR45946">
    <property type="entry name" value="HOMEOBOX PROTEIN ROUGH-RELATED"/>
    <property type="match status" value="1"/>
</dbReference>
<dbReference type="Pfam" id="PF00046">
    <property type="entry name" value="Homeodomain"/>
    <property type="match status" value="1"/>
</dbReference>
<dbReference type="PRINTS" id="PR00024">
    <property type="entry name" value="HOMEOBOX"/>
</dbReference>
<dbReference type="SMART" id="SM00389">
    <property type="entry name" value="HOX"/>
    <property type="match status" value="1"/>
</dbReference>
<dbReference type="SUPFAM" id="SSF46689">
    <property type="entry name" value="Homeodomain-like"/>
    <property type="match status" value="1"/>
</dbReference>
<dbReference type="PROSITE" id="PS00027">
    <property type="entry name" value="HOMEOBOX_1"/>
    <property type="match status" value="1"/>
</dbReference>
<dbReference type="PROSITE" id="PS50071">
    <property type="entry name" value="HOMEOBOX_2"/>
    <property type="match status" value="1"/>
</dbReference>
<evidence type="ECO:0000250" key="1">
    <source>
        <dbReference type="UniProtKB" id="P09022"/>
    </source>
</evidence>
<evidence type="ECO:0000250" key="2">
    <source>
        <dbReference type="UniProtKB" id="Q90423"/>
    </source>
</evidence>
<evidence type="ECO:0000255" key="3">
    <source>
        <dbReference type="PROSITE-ProRule" id="PRU00108"/>
    </source>
</evidence>
<evidence type="ECO:0000256" key="4">
    <source>
        <dbReference type="SAM" id="MobiDB-lite"/>
    </source>
</evidence>
<evidence type="ECO:0000269" key="5">
    <source>
    </source>
</evidence>
<evidence type="ECO:0000269" key="6">
    <source>
    </source>
</evidence>
<evidence type="ECO:0000269" key="7">
    <source>
    </source>
</evidence>
<evidence type="ECO:0000269" key="8">
    <source>
    </source>
</evidence>
<evidence type="ECO:0000269" key="9">
    <source>
    </source>
</evidence>
<evidence type="ECO:0000269" key="10">
    <source>
    </source>
</evidence>
<evidence type="ECO:0000269" key="11">
    <source>
    </source>
</evidence>
<evidence type="ECO:0000269" key="12">
    <source ref="4"/>
</evidence>
<evidence type="ECO:0000303" key="13">
    <source>
    </source>
</evidence>
<evidence type="ECO:0000305" key="14"/>
<reference key="1">
    <citation type="journal article" date="1995" name="Gene">
        <title>Structure and function of the HOX A1 human homeobox gene cDNA.</title>
        <authorList>
            <person name="Hong Y.S."/>
            <person name="Kim S.Y."/>
            <person name="Bhattacharya A."/>
            <person name="Pratt D.R."/>
            <person name="Hong W.K."/>
            <person name="Tainsky M.A."/>
        </authorList>
    </citation>
    <scope>NUCLEOTIDE SEQUENCE [MRNA] (ISOFORM 3)</scope>
    <scope>VARIANT HIS-73</scope>
    <source>
        <tissue>Ovary</tissue>
    </source>
</reference>
<reference key="2">
    <citation type="journal article" date="2004" name="Nat. Genet.">
        <title>Complete sequencing and characterization of 21,243 full-length human cDNAs.</title>
        <authorList>
            <person name="Ota T."/>
            <person name="Suzuki Y."/>
            <person name="Nishikawa T."/>
            <person name="Otsuki T."/>
            <person name="Sugiyama T."/>
            <person name="Irie R."/>
            <person name="Wakamatsu A."/>
            <person name="Hayashi K."/>
            <person name="Sato H."/>
            <person name="Nagai K."/>
            <person name="Kimura K."/>
            <person name="Makita H."/>
            <person name="Sekine M."/>
            <person name="Obayashi M."/>
            <person name="Nishi T."/>
            <person name="Shibahara T."/>
            <person name="Tanaka T."/>
            <person name="Ishii S."/>
            <person name="Yamamoto J."/>
            <person name="Saito K."/>
            <person name="Kawai Y."/>
            <person name="Isono Y."/>
            <person name="Nakamura Y."/>
            <person name="Nagahari K."/>
            <person name="Murakami K."/>
            <person name="Yasuda T."/>
            <person name="Iwayanagi T."/>
            <person name="Wagatsuma M."/>
            <person name="Shiratori A."/>
            <person name="Sudo H."/>
            <person name="Hosoiri T."/>
            <person name="Kaku Y."/>
            <person name="Kodaira H."/>
            <person name="Kondo H."/>
            <person name="Sugawara M."/>
            <person name="Takahashi M."/>
            <person name="Kanda K."/>
            <person name="Yokoi T."/>
            <person name="Furuya T."/>
            <person name="Kikkawa E."/>
            <person name="Omura Y."/>
            <person name="Abe K."/>
            <person name="Kamihara K."/>
            <person name="Katsuta N."/>
            <person name="Sato K."/>
            <person name="Tanikawa M."/>
            <person name="Yamazaki M."/>
            <person name="Ninomiya K."/>
            <person name="Ishibashi T."/>
            <person name="Yamashita H."/>
            <person name="Murakawa K."/>
            <person name="Fujimori K."/>
            <person name="Tanai H."/>
            <person name="Kimata M."/>
            <person name="Watanabe M."/>
            <person name="Hiraoka S."/>
            <person name="Chiba Y."/>
            <person name="Ishida S."/>
            <person name="Ono Y."/>
            <person name="Takiguchi S."/>
            <person name="Watanabe S."/>
            <person name="Yosida M."/>
            <person name="Hotuta T."/>
            <person name="Kusano J."/>
            <person name="Kanehori K."/>
            <person name="Takahashi-Fujii A."/>
            <person name="Hara H."/>
            <person name="Tanase T.-O."/>
            <person name="Nomura Y."/>
            <person name="Togiya S."/>
            <person name="Komai F."/>
            <person name="Hara R."/>
            <person name="Takeuchi K."/>
            <person name="Arita M."/>
            <person name="Imose N."/>
            <person name="Musashino K."/>
            <person name="Yuuki H."/>
            <person name="Oshima A."/>
            <person name="Sasaki N."/>
            <person name="Aotsuka S."/>
            <person name="Yoshikawa Y."/>
            <person name="Matsunawa H."/>
            <person name="Ichihara T."/>
            <person name="Shiohata N."/>
            <person name="Sano S."/>
            <person name="Moriya S."/>
            <person name="Momiyama H."/>
            <person name="Satoh N."/>
            <person name="Takami S."/>
            <person name="Terashima Y."/>
            <person name="Suzuki O."/>
            <person name="Nakagawa S."/>
            <person name="Senoh A."/>
            <person name="Mizoguchi H."/>
            <person name="Goto Y."/>
            <person name="Shimizu F."/>
            <person name="Wakebe H."/>
            <person name="Hishigaki H."/>
            <person name="Watanabe T."/>
            <person name="Sugiyama A."/>
            <person name="Takemoto M."/>
            <person name="Kawakami B."/>
            <person name="Yamazaki M."/>
            <person name="Watanabe K."/>
            <person name="Kumagai A."/>
            <person name="Itakura S."/>
            <person name="Fukuzumi Y."/>
            <person name="Fujimori Y."/>
            <person name="Komiyama M."/>
            <person name="Tashiro H."/>
            <person name="Tanigami A."/>
            <person name="Fujiwara T."/>
            <person name="Ono T."/>
            <person name="Yamada K."/>
            <person name="Fujii Y."/>
            <person name="Ozaki K."/>
            <person name="Hirao M."/>
            <person name="Ohmori Y."/>
            <person name="Kawabata A."/>
            <person name="Hikiji T."/>
            <person name="Kobatake N."/>
            <person name="Inagaki H."/>
            <person name="Ikema Y."/>
            <person name="Okamoto S."/>
            <person name="Okitani R."/>
            <person name="Kawakami T."/>
            <person name="Noguchi S."/>
            <person name="Itoh T."/>
            <person name="Shigeta K."/>
            <person name="Senba T."/>
            <person name="Matsumura K."/>
            <person name="Nakajima Y."/>
            <person name="Mizuno T."/>
            <person name="Morinaga M."/>
            <person name="Sasaki M."/>
            <person name="Togashi T."/>
            <person name="Oyama M."/>
            <person name="Hata H."/>
            <person name="Watanabe M."/>
            <person name="Komatsu T."/>
            <person name="Mizushima-Sugano J."/>
            <person name="Satoh T."/>
            <person name="Shirai Y."/>
            <person name="Takahashi Y."/>
            <person name="Nakagawa K."/>
            <person name="Okumura K."/>
            <person name="Nagase T."/>
            <person name="Nomura N."/>
            <person name="Kikuchi H."/>
            <person name="Masuho Y."/>
            <person name="Yamashita R."/>
            <person name="Nakai K."/>
            <person name="Yada T."/>
            <person name="Nakamura Y."/>
            <person name="Ohara O."/>
            <person name="Isogai T."/>
            <person name="Sugano S."/>
        </authorList>
    </citation>
    <scope>NUCLEOTIDE SEQUENCE [LARGE SCALE MRNA] (ISOFORM 3)</scope>
</reference>
<reference key="3">
    <citation type="journal article" date="2003" name="Science">
        <title>Human chromosome 7: DNA sequence and biology.</title>
        <authorList>
            <person name="Scherer S.W."/>
            <person name="Cheung J."/>
            <person name="MacDonald J.R."/>
            <person name="Osborne L.R."/>
            <person name="Nakabayashi K."/>
            <person name="Herbrick J.-A."/>
            <person name="Carson A.R."/>
            <person name="Parker-Katiraee L."/>
            <person name="Skaug J."/>
            <person name="Khaja R."/>
            <person name="Zhang J."/>
            <person name="Hudek A.K."/>
            <person name="Li M."/>
            <person name="Haddad M."/>
            <person name="Duggan G.E."/>
            <person name="Fernandez B.A."/>
            <person name="Kanematsu E."/>
            <person name="Gentles S."/>
            <person name="Christopoulos C.C."/>
            <person name="Choufani S."/>
            <person name="Kwasnicka D."/>
            <person name="Zheng X.H."/>
            <person name="Lai Z."/>
            <person name="Nusskern D.R."/>
            <person name="Zhang Q."/>
            <person name="Gu Z."/>
            <person name="Lu F."/>
            <person name="Zeesman S."/>
            <person name="Nowaczyk M.J."/>
            <person name="Teshima I."/>
            <person name="Chitayat D."/>
            <person name="Shuman C."/>
            <person name="Weksberg R."/>
            <person name="Zackai E.H."/>
            <person name="Grebe T.A."/>
            <person name="Cox S.R."/>
            <person name="Kirkpatrick S.J."/>
            <person name="Rahman N."/>
            <person name="Friedman J.M."/>
            <person name="Heng H.H.Q."/>
            <person name="Pelicci P.G."/>
            <person name="Lo-Coco F."/>
            <person name="Belloni E."/>
            <person name="Shaffer L.G."/>
            <person name="Pober B."/>
            <person name="Morton C.C."/>
            <person name="Gusella J.F."/>
            <person name="Bruns G.A.P."/>
            <person name="Korf B.R."/>
            <person name="Quade B.J."/>
            <person name="Ligon A.H."/>
            <person name="Ferguson H."/>
            <person name="Higgins A.W."/>
            <person name="Leach N.T."/>
            <person name="Herrick S.R."/>
            <person name="Lemyre E."/>
            <person name="Farra C.G."/>
            <person name="Kim H.-G."/>
            <person name="Summers A.M."/>
            <person name="Gripp K.W."/>
            <person name="Roberts W."/>
            <person name="Szatmari P."/>
            <person name="Winsor E.J.T."/>
            <person name="Grzeschik K.-H."/>
            <person name="Teebi A."/>
            <person name="Minassian B.A."/>
            <person name="Kere J."/>
            <person name="Armengol L."/>
            <person name="Pujana M.A."/>
            <person name="Estivill X."/>
            <person name="Wilson M.D."/>
            <person name="Koop B.F."/>
            <person name="Tosi S."/>
            <person name="Moore G.E."/>
            <person name="Boright A.P."/>
            <person name="Zlotorynski E."/>
            <person name="Kerem B."/>
            <person name="Kroisel P.M."/>
            <person name="Petek E."/>
            <person name="Oscier D.G."/>
            <person name="Mould S.J."/>
            <person name="Doehner H."/>
            <person name="Doehner K."/>
            <person name="Rommens J.M."/>
            <person name="Vincent J.B."/>
            <person name="Venter J.C."/>
            <person name="Li P.W."/>
            <person name="Mural R.J."/>
            <person name="Adams M.D."/>
            <person name="Tsui L.-C."/>
        </authorList>
    </citation>
    <scope>NUCLEOTIDE SEQUENCE [LARGE SCALE GENOMIC DNA]</scope>
    <scope>VARIANT HIS-73</scope>
</reference>
<reference key="4">
    <citation type="submission" date="2005-07" db="EMBL/GenBank/DDBJ databases">
        <authorList>
            <person name="Mural R.J."/>
            <person name="Istrail S."/>
            <person name="Sutton G.G."/>
            <person name="Florea L."/>
            <person name="Halpern A.L."/>
            <person name="Mobarry C.M."/>
            <person name="Lippert R."/>
            <person name="Walenz B."/>
            <person name="Shatkay H."/>
            <person name="Dew I."/>
            <person name="Miller J.R."/>
            <person name="Flanigan M.J."/>
            <person name="Edwards N.J."/>
            <person name="Bolanos R."/>
            <person name="Fasulo D."/>
            <person name="Halldorsson B.V."/>
            <person name="Hannenhalli S."/>
            <person name="Turner R."/>
            <person name="Yooseph S."/>
            <person name="Lu F."/>
            <person name="Nusskern D.R."/>
            <person name="Shue B.C."/>
            <person name="Zheng X.H."/>
            <person name="Zhong F."/>
            <person name="Delcher A.L."/>
            <person name="Huson D.H."/>
            <person name="Kravitz S.A."/>
            <person name="Mouchard L."/>
            <person name="Reinert K."/>
            <person name="Remington K.A."/>
            <person name="Clark A.G."/>
            <person name="Waterman M.S."/>
            <person name="Eichler E.E."/>
            <person name="Adams M.D."/>
            <person name="Hunkapiller M.W."/>
            <person name="Myers E.W."/>
            <person name="Venter J.C."/>
        </authorList>
    </citation>
    <scope>NUCLEOTIDE SEQUENCE [LARGE SCALE GENOMIC DNA]</scope>
    <scope>VARIANT HIS-73</scope>
</reference>
<reference key="5">
    <citation type="journal article" date="2003" name="Nature">
        <title>The DNA sequence of human chromosome 7.</title>
        <authorList>
            <person name="Hillier L.W."/>
            <person name="Fulton R.S."/>
            <person name="Fulton L.A."/>
            <person name="Graves T.A."/>
            <person name="Pepin K.H."/>
            <person name="Wagner-McPherson C."/>
            <person name="Layman D."/>
            <person name="Maas J."/>
            <person name="Jaeger S."/>
            <person name="Walker R."/>
            <person name="Wylie K."/>
            <person name="Sekhon M."/>
            <person name="Becker M.C."/>
            <person name="O'Laughlin M.D."/>
            <person name="Schaller M.E."/>
            <person name="Fewell G.A."/>
            <person name="Delehaunty K.D."/>
            <person name="Miner T.L."/>
            <person name="Nash W.E."/>
            <person name="Cordes M."/>
            <person name="Du H."/>
            <person name="Sun H."/>
            <person name="Edwards J."/>
            <person name="Bradshaw-Cordum H."/>
            <person name="Ali J."/>
            <person name="Andrews S."/>
            <person name="Isak A."/>
            <person name="Vanbrunt A."/>
            <person name="Nguyen C."/>
            <person name="Du F."/>
            <person name="Lamar B."/>
            <person name="Courtney L."/>
            <person name="Kalicki J."/>
            <person name="Ozersky P."/>
            <person name="Bielicki L."/>
            <person name="Scott K."/>
            <person name="Holmes A."/>
            <person name="Harkins R."/>
            <person name="Harris A."/>
            <person name="Strong C.M."/>
            <person name="Hou S."/>
            <person name="Tomlinson C."/>
            <person name="Dauphin-Kohlberg S."/>
            <person name="Kozlowicz-Reilly A."/>
            <person name="Leonard S."/>
            <person name="Rohlfing T."/>
            <person name="Rock S.M."/>
            <person name="Tin-Wollam A.-M."/>
            <person name="Abbott A."/>
            <person name="Minx P."/>
            <person name="Maupin R."/>
            <person name="Strowmatt C."/>
            <person name="Latreille P."/>
            <person name="Miller N."/>
            <person name="Johnson D."/>
            <person name="Murray J."/>
            <person name="Woessner J.P."/>
            <person name="Wendl M.C."/>
            <person name="Yang S.-P."/>
            <person name="Schultz B.R."/>
            <person name="Wallis J.W."/>
            <person name="Spieth J."/>
            <person name="Bieri T.A."/>
            <person name="Nelson J.O."/>
            <person name="Berkowicz N."/>
            <person name="Wohldmann P.E."/>
            <person name="Cook L.L."/>
            <person name="Hickenbotham M.T."/>
            <person name="Eldred J."/>
            <person name="Williams D."/>
            <person name="Bedell J.A."/>
            <person name="Mardis E.R."/>
            <person name="Clifton S.W."/>
            <person name="Chissoe S.L."/>
            <person name="Marra M.A."/>
            <person name="Raymond C."/>
            <person name="Haugen E."/>
            <person name="Gillett W."/>
            <person name="Zhou Y."/>
            <person name="James R."/>
            <person name="Phelps K."/>
            <person name="Iadanoto S."/>
            <person name="Bubb K."/>
            <person name="Simms E."/>
            <person name="Levy R."/>
            <person name="Clendenning J."/>
            <person name="Kaul R."/>
            <person name="Kent W.J."/>
            <person name="Furey T.S."/>
            <person name="Baertsch R.A."/>
            <person name="Brent M.R."/>
            <person name="Keibler E."/>
            <person name="Flicek P."/>
            <person name="Bork P."/>
            <person name="Suyama M."/>
            <person name="Bailey J.A."/>
            <person name="Portnoy M.E."/>
            <person name="Torrents D."/>
            <person name="Chinwalla A.T."/>
            <person name="Gish W.R."/>
            <person name="Eddy S.R."/>
            <person name="McPherson J.D."/>
            <person name="Olson M.V."/>
            <person name="Eichler E.E."/>
            <person name="Green E.D."/>
            <person name="Waterston R.H."/>
            <person name="Wilson R.K."/>
        </authorList>
    </citation>
    <scope>NUCLEOTIDE SEQUENCE [LARGE SCALE GENOMIC DNA]</scope>
</reference>
<reference key="6">
    <citation type="journal article" date="2004" name="Genome Res.">
        <title>The status, quality, and expansion of the NIH full-length cDNA project: the Mammalian Gene Collection (MGC).</title>
        <authorList>
            <consortium name="The MGC Project Team"/>
        </authorList>
    </citation>
    <scope>NUCLEOTIDE SEQUENCE [LARGE SCALE MRNA] (ISOFORM 3)</scope>
    <scope>VARIANT HIS-73</scope>
    <source>
        <tissue>Skin</tissue>
    </source>
</reference>
<reference key="7">
    <citation type="journal article" date="1995" name="Biochem. Biophys. Res. Commun.">
        <title>Retinoic acid induces three newly cloned HOXA1 transcripts in MCF7 breast cancer cells.</title>
        <authorList>
            <person name="Chariot A."/>
            <person name="Moreau L."/>
            <person name="Senterre G."/>
            <person name="Sobel M."/>
            <person name="Castronovo V."/>
        </authorList>
    </citation>
    <scope>NUCLEOTIDE SEQUENCE [MRNA] OF 6-335 (ISOFORMS 1; 2 AND 3)</scope>
    <scope>VARIANT HIS-73</scope>
</reference>
<reference key="8">
    <citation type="journal article" date="1997" name="Oncogene">
        <title>The highest affinity DNA element bound by Pbx complexes in t(1;19) leukemic cells fails to mediate cooperative DNA-binding or cooperative transactivation by E2a-Pbx1 and class I Hox proteins - evidence for selective targetting of E2a-Pbx1 to a subset of Pbx-recognition elements.</title>
        <authorList>
            <person name="Knoepfler P.S."/>
            <person name="Kamps M.P."/>
        </authorList>
    </citation>
    <scope>INTERACTION WITH PBX1</scope>
</reference>
<reference key="9">
    <citation type="journal article" date="2000" name="Teratology">
        <title>Discovery of allelic variants of HOXA1 and HOXB1: genetic susceptibility to autism spectrum disorders.</title>
        <authorList>
            <person name="Ingram J.L."/>
            <person name="Stodgell C.J."/>
            <person name="Hyman S.L."/>
            <person name="Figlewicz D.A."/>
            <person name="Weitkamp L.R."/>
            <person name="Rodier P.M."/>
        </authorList>
    </citation>
    <scope>VARIANT HIS-73</scope>
</reference>
<reference key="10">
    <citation type="journal article" date="2005" name="Nat. Genet.">
        <title>Homozygous HOXA1 mutations disrupt human brainstem, inner ear, cardiovascular and cognitive development.</title>
        <authorList>
            <person name="Tischfield M.A."/>
            <person name="Bosley T.M."/>
            <person name="Salih M.A.M."/>
            <person name="Alorainy I.A."/>
            <person name="Sener E.C."/>
            <person name="Nester M.J."/>
            <person name="Oystreck D.T."/>
            <person name="Chan W.-M."/>
            <person name="Andrews C."/>
            <person name="Erickson R.P."/>
            <person name="Engle E.C."/>
        </authorList>
    </citation>
    <scope>INVOLVEMENT IN ABDS AND BSAS</scope>
</reference>
<accession>P49639</accession>
<accession>A0A2R8Y4R9</accession>
<accession>A4D184</accession>
<accession>B2R8U7</accession>
<accession>O43363</accession>
<feature type="chain" id="PRO_0000200030" description="Homeobox protein Hox-A1">
    <location>
        <begin position="1"/>
        <end position="335"/>
    </location>
</feature>
<feature type="DNA-binding region" description="Homeobox" evidence="3">
    <location>
        <begin position="229"/>
        <end position="288"/>
    </location>
</feature>
<feature type="region of interest" description="Disordered" evidence="4">
    <location>
        <begin position="61"/>
        <end position="80"/>
    </location>
</feature>
<feature type="region of interest" description="Interaction with OGT" evidence="1">
    <location>
        <begin position="75"/>
        <end position="203"/>
    </location>
</feature>
<feature type="region of interest" description="Disordered" evidence="4">
    <location>
        <begin position="281"/>
        <end position="335"/>
    </location>
</feature>
<feature type="short sequence motif" description="Antp-type hexapeptide">
    <location>
        <begin position="204"/>
        <end position="209"/>
    </location>
</feature>
<feature type="compositionally biased region" description="Basic residues" evidence="4">
    <location>
        <begin position="64"/>
        <end position="75"/>
    </location>
</feature>
<feature type="compositionally biased region" description="Basic and acidic residues" evidence="4">
    <location>
        <begin position="303"/>
        <end position="312"/>
    </location>
</feature>
<feature type="compositionally biased region" description="Low complexity" evidence="4">
    <location>
        <begin position="313"/>
        <end position="328"/>
    </location>
</feature>
<feature type="splice variant" id="VSP_002376" description="In isoform 1." evidence="13">
    <original>VSGGYPQCAPAVYSGNLSS</original>
    <variation>PPRSLSLPRIGDIFSSADF</variation>
    <location>
        <begin position="119"/>
        <end position="137"/>
    </location>
</feature>
<feature type="splice variant" id="VSP_002377" description="In isoform 1." evidence="13">
    <location>
        <begin position="138"/>
        <end position="335"/>
    </location>
</feature>
<feature type="splice variant" id="VSP_002378" description="In isoform 2." evidence="13">
    <original>KVGEYGYLG</original>
    <variation>QSCWLVDAP</variation>
    <location>
        <begin position="219"/>
        <end position="227"/>
    </location>
</feature>
<feature type="splice variant" id="VSP_002379" description="In isoform 2." evidence="13">
    <location>
        <begin position="228"/>
        <end position="335"/>
    </location>
</feature>
<feature type="sequence variant" id="VAR_010305" description="In dbSNP:rs10951154." evidence="5 6 7 9 10 12">
    <original>R</original>
    <variation>H</variation>
    <location>
        <position position="73"/>
    </location>
</feature>
<feature type="sequence variant" id="VAR_030576" description="In dbSNP:rs17500494.">
    <original>E</original>
    <variation>A</variation>
    <location>
        <position position="189"/>
    </location>
</feature>
<organism>
    <name type="scientific">Homo sapiens</name>
    <name type="common">Human</name>
    <dbReference type="NCBI Taxonomy" id="9606"/>
    <lineage>
        <taxon>Eukaryota</taxon>
        <taxon>Metazoa</taxon>
        <taxon>Chordata</taxon>
        <taxon>Craniata</taxon>
        <taxon>Vertebrata</taxon>
        <taxon>Euteleostomi</taxon>
        <taxon>Mammalia</taxon>
        <taxon>Eutheria</taxon>
        <taxon>Euarchontoglires</taxon>
        <taxon>Primates</taxon>
        <taxon>Haplorrhini</taxon>
        <taxon>Catarrhini</taxon>
        <taxon>Hominidae</taxon>
        <taxon>Homo</taxon>
    </lineage>
</organism>
<protein>
    <recommendedName>
        <fullName>Homeobox protein Hox-A1</fullName>
    </recommendedName>
    <alternativeName>
        <fullName>Homeobox protein Hox-1F</fullName>
    </alternativeName>
</protein>
<proteinExistence type="evidence at protein level"/>
<sequence>MDNARMNSFLEYPILSSGDSGTCSARAYPSDHRITTFQSCAVSANSCGGDDRFLVGRGVQIGSPHHHHHHHHRHPQPATYQTSGNLGVSYSHSSCGPSYGSQNFSAPYSPYALNQEADVSGGYPQCAPAVYSGNLSSPMVQHHHHHQGYAGGAVGSPQYIHHSYGQEHQSLALATYNNSLSPLHASHQEACRSPASETSSPAQTFDWMKVKRNPPKTGKVGEYGYLGQPNAVRTNFTTKQLTELEKEFHFNKYLTRARRVEIAASLQLNETQVKIWFQNRRMKQKKREKEGLLPISPATPPGNDEKAEESSEKSSSSPCVPSPGSSTSDTLTTSH</sequence>
<keyword id="KW-0025">Alternative splicing</keyword>
<keyword id="KW-1268">Autism spectrum disorder</keyword>
<keyword id="KW-0217">Developmental protein</keyword>
<keyword id="KW-0238">DNA-binding</keyword>
<keyword id="KW-0371">Homeobox</keyword>
<keyword id="KW-0539">Nucleus</keyword>
<keyword id="KW-1267">Proteomics identification</keyword>
<keyword id="KW-1185">Reference proteome</keyword>
<keyword id="KW-0804">Transcription</keyword>
<keyword id="KW-0805">Transcription regulation</keyword>
<comment type="function">
    <text evidence="1 2 8">Sequence-specific transcription factor (By similarity). Regulates multiple developmental processes including brainstem, inner and outer ear, abducens nerve and cardiovascular development and morphogenesis as well as cognition and behavior (PubMed:16155570). Also part of a developmental regulatory system that provides cells with specific positional identities on the anterior-posterior axis. Acts on the anterior body structures. Seems to act in the maintenance and/or generation of hindbrain segments (By similarity). Activates transcription in the presence of PBX1A and PKNOX1 (By similarity).</text>
</comment>
<comment type="subunit">
    <text evidence="1 11">Interacts with OGT (via TPR repeats domain); the interaction takes place mainly in the nucleus (By similarity). Forms a DNA-binding heterodimer with transcription factor PBX1 (PubMed:9191052).</text>
</comment>
<comment type="interaction">
    <interactant intactId="EBI-740785">
        <id>P49639</id>
    </interactant>
    <interactant intactId="EBI-12006944">
        <id>O43184-4</id>
        <label>ADAM12</label>
    </interactant>
    <organismsDiffer>false</organismsDiffer>
    <experiments>3</experiments>
</comment>
<comment type="interaction">
    <interactant intactId="EBI-740785">
        <id>P49639</id>
    </interactant>
    <interactant intactId="EBI-10173507">
        <id>Q6UY14-3</id>
        <label>ADAMTSL4</label>
    </interactant>
    <organismsDiffer>false</organismsDiffer>
    <experiments>10</experiments>
</comment>
<comment type="interaction">
    <interactant intactId="EBI-740785">
        <id>P49639</id>
    </interactant>
    <interactant intactId="EBI-727098">
        <id>P21549</id>
        <label>AGXT</label>
    </interactant>
    <organismsDiffer>false</organismsDiffer>
    <experiments>3</experiments>
</comment>
<comment type="interaction">
    <interactant intactId="EBI-740785">
        <id>P49639</id>
    </interactant>
    <interactant intactId="EBI-10186621">
        <id>Q9NP73-4</id>
        <label>ALG13</label>
    </interactant>
    <organismsDiffer>false</organismsDiffer>
    <experiments>3</experiments>
</comment>
<comment type="interaction">
    <interactant intactId="EBI-740785">
        <id>P49639</id>
    </interactant>
    <interactant intactId="EBI-1211484">
        <id>P05187</id>
        <label>ALPP</label>
    </interactant>
    <organismsDiffer>false</organismsDiffer>
    <experiments>7</experiments>
</comment>
<comment type="interaction">
    <interactant intactId="EBI-740785">
        <id>P49639</id>
    </interactant>
    <interactant intactId="EBI-12823597">
        <id>Q9Y4X0-3</id>
        <label>AMMECR1</label>
    </interactant>
    <organismsDiffer>false</organismsDiffer>
    <experiments>3</experiments>
</comment>
<comment type="interaction">
    <interactant intactId="EBI-740785">
        <id>P49639</id>
    </interactant>
    <interactant intactId="EBI-17286414">
        <id>A2BDD9</id>
        <label>AMOT</label>
    </interactant>
    <organismsDiffer>false</organismsDiffer>
    <experiments>3</experiments>
</comment>
<comment type="interaction">
    <interactant intactId="EBI-740785">
        <id>P49639</id>
    </interactant>
    <interactant intactId="EBI-11954519">
        <id>Q49AR9</id>
        <label>ANKS1A</label>
    </interactant>
    <organismsDiffer>false</organismsDiffer>
    <experiments>3</experiments>
</comment>
<comment type="interaction">
    <interactant intactId="EBI-740785">
        <id>P49639</id>
    </interactant>
    <interactant intactId="EBI-948603">
        <id>Q03989</id>
        <label>ARID5A</label>
    </interactant>
    <organismsDiffer>false</organismsDiffer>
    <experiments>3</experiments>
</comment>
<comment type="interaction">
    <interactant intactId="EBI-740785">
        <id>P49639</id>
    </interactant>
    <interactant intactId="EBI-742909">
        <id>Q9H6L4</id>
        <label>ARMC7</label>
    </interactant>
    <organismsDiffer>false</organismsDiffer>
    <experiments>3</experiments>
</comment>
<comment type="interaction">
    <interactant intactId="EBI-740785">
        <id>P49639</id>
    </interactant>
    <interactant intactId="EBI-12837280">
        <id>Q674R7-2</id>
        <label>ATG9B</label>
    </interactant>
    <organismsDiffer>false</organismsDiffer>
    <experiments>3</experiments>
</comment>
<comment type="interaction">
    <interactant intactId="EBI-740785">
        <id>P49639</id>
    </interactant>
    <interactant intactId="EBI-12811889">
        <id>Q9Y6H3</id>
        <label>ATP23</label>
    </interactant>
    <organismsDiffer>false</organismsDiffer>
    <experiments>3</experiments>
</comment>
<comment type="interaction">
    <interactant intactId="EBI-740785">
        <id>P49639</id>
    </interactant>
    <interactant intactId="EBI-2949658">
        <id>O95429</id>
        <label>BAG4</label>
    </interactant>
    <organismsDiffer>false</organismsDiffer>
    <experiments>3</experiments>
</comment>
<comment type="interaction">
    <interactant intactId="EBI-740785">
        <id>P49639</id>
    </interactant>
    <interactant intactId="EBI-742750">
        <id>Q8TBE0</id>
        <label>BAHD1</label>
    </interactant>
    <organismsDiffer>false</organismsDiffer>
    <experiments>3</experiments>
</comment>
<comment type="interaction">
    <interactant intactId="EBI-740785">
        <id>P49639</id>
    </interactant>
    <interactant intactId="EBI-742695">
        <id>Q8N1L9</id>
        <label>BATF2</label>
    </interactant>
    <organismsDiffer>false</organismsDiffer>
    <experiments>3</experiments>
</comment>
<comment type="interaction">
    <interactant intactId="EBI-740785">
        <id>P49639</id>
    </interactant>
    <interactant intactId="EBI-3895726">
        <id>P62952</id>
        <label>BLCAP</label>
    </interactant>
    <organismsDiffer>false</organismsDiffer>
    <experiments>3</experiments>
</comment>
<comment type="interaction">
    <interactant intactId="EBI-740785">
        <id>P49639</id>
    </interactant>
    <interactant intactId="EBI-2548012">
        <id>Q9H2G9</id>
        <label>BLZF1</label>
    </interactant>
    <organismsDiffer>false</organismsDiffer>
    <experiments>6</experiments>
</comment>
<comment type="interaction">
    <interactant intactId="EBI-740785">
        <id>P49639</id>
    </interactant>
    <interactant intactId="EBI-11532900">
        <id>J3KQ12</id>
        <label>BSCL2</label>
    </interactant>
    <organismsDiffer>false</organismsDiffer>
    <experiments>6</experiments>
</comment>
<comment type="interaction">
    <interactant intactId="EBI-740785">
        <id>P49639</id>
    </interactant>
    <interactant intactId="EBI-3904603">
        <id>P41223</id>
        <label>BUD31</label>
    </interactant>
    <organismsDiffer>false</organismsDiffer>
    <experiments>3</experiments>
</comment>
<comment type="interaction">
    <interactant intactId="EBI-740785">
        <id>P49639</id>
    </interactant>
    <interactant intactId="EBI-744545">
        <id>Q8NEC5</id>
        <label>CATSPER1</label>
    </interactant>
    <organismsDiffer>false</organismsDiffer>
    <experiments>3</experiments>
</comment>
<comment type="interaction">
    <interactant intactId="EBI-740785">
        <id>P49639</id>
    </interactant>
    <interactant intactId="EBI-744556">
        <id>Q96HB5</id>
        <label>CCDC120</label>
    </interactant>
    <organismsDiffer>false</organismsDiffer>
    <experiments>5</experiments>
</comment>
<comment type="interaction">
    <interactant intactId="EBI-740785">
        <id>P49639</id>
    </interactant>
    <interactant intactId="EBI-3904822">
        <id>P48745</id>
        <label>CCN3</label>
    </interactant>
    <organismsDiffer>false</organismsDiffer>
    <experiments>4</experiments>
</comment>
<comment type="interaction">
    <interactant intactId="EBI-740785">
        <id>P49639</id>
    </interactant>
    <interactant intactId="EBI-1050638">
        <id>O95388</id>
        <label>CCN4</label>
    </interactant>
    <organismsDiffer>false</organismsDiffer>
    <experiments>5</experiments>
</comment>
<comment type="interaction">
    <interactant intactId="EBI-740785">
        <id>P49639</id>
    </interactant>
    <interactant intactId="EBI-2850068">
        <id>O76076</id>
        <label>CCN5</label>
    </interactant>
    <organismsDiffer>false</organismsDiffer>
    <experiments>3</experiments>
</comment>
<comment type="interaction">
    <interactant intactId="EBI-740785">
        <id>P49639</id>
    </interactant>
    <interactant intactId="EBI-12010594">
        <id>O75909-2</id>
        <label>CCNK</label>
    </interactant>
    <organismsDiffer>false</organismsDiffer>
    <experiments>5</experiments>
</comment>
<comment type="interaction">
    <interactant intactId="EBI-740785">
        <id>P49639</id>
    </interactant>
    <interactant intactId="EBI-355710">
        <id>P48643</id>
        <label>CCT5</label>
    </interactant>
    <organismsDiffer>false</organismsDiffer>
    <experiments>3</experiments>
</comment>
<comment type="interaction">
    <interactant intactId="EBI-740785">
        <id>P49639</id>
    </interactant>
    <interactant intactId="EBI-2115896">
        <id>Q04900</id>
        <label>CD164</label>
    </interactant>
    <organismsDiffer>false</organismsDiffer>
    <experiments>3</experiments>
</comment>
<comment type="interaction">
    <interactant intactId="EBI-740785">
        <id>P49639</id>
    </interactant>
    <interactant intactId="EBI-2802782">
        <id>Q6NVV7</id>
        <label>CDPF1</label>
    </interactant>
    <organismsDiffer>false</organismsDiffer>
    <experiments>3</experiments>
</comment>
<comment type="interaction">
    <interactant intactId="EBI-740785">
        <id>P49639</id>
    </interactant>
    <interactant intactId="EBI-12261896">
        <id>Q5T4B2</id>
        <label>CERCAM</label>
    </interactant>
    <organismsDiffer>false</organismsDiffer>
    <experiments>3</experiments>
</comment>
<comment type="interaction">
    <interactant intactId="EBI-740785">
        <id>P49639</id>
    </interactant>
    <interactant intactId="EBI-718615">
        <id>Q9H5F2</id>
        <label>CFAP68</label>
    </interactant>
    <organismsDiffer>false</organismsDiffer>
    <experiments>3</experiments>
</comment>
<comment type="interaction">
    <interactant intactId="EBI-740785">
        <id>P49639</id>
    </interactant>
    <interactant intactId="EBI-9038570">
        <id>P27918</id>
        <label>CFP</label>
    </interactant>
    <organismsDiffer>false</organismsDiffer>
    <experiments>3</experiments>
</comment>
<comment type="interaction">
    <interactant intactId="EBI-740785">
        <id>P49639</id>
    </interactant>
    <interactant intactId="EBI-741528">
        <id>Q9UKJ5</id>
        <label>CHIC2</label>
    </interactant>
    <organismsDiffer>false</organismsDiffer>
    <experiments>4</experiments>
</comment>
<comment type="interaction">
    <interactant intactId="EBI-740785">
        <id>P49639</id>
    </interactant>
    <interactant intactId="EBI-947551">
        <id>Q9H2X0</id>
        <label>CHRD</label>
    </interactant>
    <organismsDiffer>false</organismsDiffer>
    <experiments>4</experiments>
</comment>
<comment type="interaction">
    <interactant intactId="EBI-740785">
        <id>P49639</id>
    </interactant>
    <interactant intactId="EBI-12593838">
        <id>Q6WN34-2</id>
        <label>CHRDL2</label>
    </interactant>
    <organismsDiffer>false</organismsDiffer>
    <experiments>3</experiments>
</comment>
<comment type="interaction">
    <interactant intactId="EBI-740785">
        <id>P49639</id>
    </interactant>
    <interactant intactId="EBI-12819063">
        <id>Q9BYD5</id>
        <label>CNFN</label>
    </interactant>
    <organismsDiffer>false</organismsDiffer>
    <experiments>3</experiments>
</comment>
<comment type="interaction">
    <interactant intactId="EBI-740785">
        <id>P49639</id>
    </interactant>
    <interactant intactId="EBI-741032">
        <id>Q8NE01</id>
        <label>CNNM3</label>
    </interactant>
    <organismsDiffer>false</organismsDiffer>
    <experiments>5</experiments>
</comment>
<comment type="interaction">
    <interactant intactId="EBI-740785">
        <id>P49639</id>
    </interactant>
    <interactant intactId="EBI-747133">
        <id>P27658</id>
        <label>COL8A1</label>
    </interactant>
    <organismsDiffer>false</organismsDiffer>
    <experiments>6</experiments>
</comment>
<comment type="interaction">
    <interactant intactId="EBI-740785">
        <id>P49639</id>
    </interactant>
    <interactant intactId="EBI-10192698">
        <id>Q02930-3</id>
        <label>CREB5</label>
    </interactant>
    <organismsDiffer>false</organismsDiffer>
    <experiments>5</experiments>
</comment>
<comment type="interaction">
    <interactant intactId="EBI-740785">
        <id>P49639</id>
    </interactant>
    <interactant intactId="EBI-10979071">
        <id>O60888-3</id>
        <label>CUTA</label>
    </interactant>
    <organismsDiffer>false</organismsDiffer>
    <experiments>3</experiments>
</comment>
<comment type="interaction">
    <interactant intactId="EBI-740785">
        <id>P49639</id>
    </interactant>
    <interactant intactId="EBI-14156412">
        <id>Q08AG9</id>
        <label>CYP21A2</label>
    </interactant>
    <organismsDiffer>false</organismsDiffer>
    <experiments>5</experiments>
</comment>
<comment type="interaction">
    <interactant intactId="EBI-740785">
        <id>P49639</id>
    </interactant>
    <interactant intactId="EBI-3867333">
        <id>A8MQ03</id>
        <label>CYSRT1</label>
    </interactant>
    <organismsDiffer>false</organismsDiffer>
    <experiments>6</experiments>
</comment>
<comment type="interaction">
    <interactant intactId="EBI-740785">
        <id>P49639</id>
    </interactant>
    <interactant intactId="EBI-10976677">
        <id>G5E9A7</id>
        <label>DMWD</label>
    </interactant>
    <organismsDiffer>false</organismsDiffer>
    <experiments>3</experiments>
</comment>
<comment type="interaction">
    <interactant intactId="EBI-740785">
        <id>P49639</id>
    </interactant>
    <interactant intactId="EBI-448771">
        <id>Q92608</id>
        <label>DOCK2</label>
    </interactant>
    <organismsDiffer>false</organismsDiffer>
    <experiments>3</experiments>
</comment>
<comment type="interaction">
    <interactant intactId="EBI-740785">
        <id>P49639</id>
    </interactant>
    <interactant intactId="EBI-1752361">
        <id>Q8IZD9</id>
        <label>DOCK3</label>
    </interactant>
    <organismsDiffer>false</organismsDiffer>
    <experiments>3</experiments>
</comment>
<comment type="interaction">
    <interactant intactId="EBI-740785">
        <id>P49639</id>
    </interactant>
    <interactant intactId="EBI-10694655">
        <id>Q7L591-3</id>
        <label>DOK3</label>
    </interactant>
    <organismsDiffer>false</organismsDiffer>
    <experiments>3</experiments>
</comment>
<comment type="interaction">
    <interactant intactId="EBI-740785">
        <id>P49639</id>
    </interactant>
    <interactant intactId="EBI-740376">
        <id>Q86UW9</id>
        <label>DTX2</label>
    </interactant>
    <organismsDiffer>false</organismsDiffer>
    <experiments>6</experiments>
</comment>
<comment type="interaction">
    <interactant intactId="EBI-740785">
        <id>P49639</id>
    </interactant>
    <interactant intactId="EBI-3443946">
        <id>Q9Y6W6</id>
        <label>DUSP10</label>
    </interactant>
    <organismsDiffer>false</organismsDiffer>
    <experiments>5</experiments>
</comment>
<comment type="interaction">
    <interactant intactId="EBI-740785">
        <id>P49639</id>
    </interactant>
    <interactant intactId="EBI-536772">
        <id>Q12805</id>
        <label>EFEMP1</label>
    </interactant>
    <organismsDiffer>false</organismsDiffer>
    <experiments>4</experiments>
</comment>
<comment type="interaction">
    <interactant intactId="EBI-740785">
        <id>P49639</id>
    </interactant>
    <interactant intactId="EBI-949532">
        <id>Q9UHF1</id>
        <label>EGFL7</label>
    </interactant>
    <organismsDiffer>false</organismsDiffer>
    <experiments>4</experiments>
</comment>
<comment type="interaction">
    <interactant intactId="EBI-740785">
        <id>P49639</id>
    </interactant>
    <interactant intactId="EBI-744099">
        <id>Q9H0I2</id>
        <label>ENKD1</label>
    </interactant>
    <organismsDiffer>false</organismsDiffer>
    <experiments>5</experiments>
</comment>
<comment type="interaction">
    <interactant intactId="EBI-740785">
        <id>P49639</id>
    </interactant>
    <interactant intactId="EBI-946972">
        <id>Q9UM22</id>
        <label>EPDR1</label>
    </interactant>
    <organismsDiffer>false</organismsDiffer>
    <experiments>3</experiments>
</comment>
<comment type="interaction">
    <interactant intactId="EBI-740785">
        <id>P49639</id>
    </interactant>
    <interactant intactId="EBI-12260294">
        <id>Q9NQ30</id>
        <label>ESM1</label>
    </interactant>
    <organismsDiffer>false</organismsDiffer>
    <experiments>3</experiments>
</comment>
<comment type="interaction">
    <interactant intactId="EBI-740785">
        <id>P49639</id>
    </interactant>
    <interactant intactId="EBI-12259414">
        <id>Q92731-3</id>
        <label>ESR2</label>
    </interactant>
    <organismsDiffer>false</organismsDiffer>
    <experiments>3</experiments>
</comment>
<comment type="interaction">
    <interactant intactId="EBI-740785">
        <id>P49639</id>
    </interactant>
    <interactant intactId="EBI-10314666">
        <id>Q9NVM1</id>
        <label>EVA1B</label>
    </interactant>
    <organismsDiffer>false</organismsDiffer>
    <experiments>3</experiments>
</comment>
<comment type="interaction">
    <interactant intactId="EBI-740785">
        <id>P49639</id>
    </interactant>
    <interactant intactId="EBI-10226932">
        <id>Q0VG06-3</id>
        <label>FAAP100</label>
    </interactant>
    <organismsDiffer>false</organismsDiffer>
    <experiments>3</experiments>
</comment>
<comment type="interaction">
    <interactant intactId="EBI-740785">
        <id>P49639</id>
    </interactant>
    <interactant intactId="EBI-12290965">
        <id>Q5XKK7</id>
        <label>FAM219B</label>
    </interactant>
    <organismsDiffer>false</organismsDiffer>
    <experiments>3</experiments>
</comment>
<comment type="interaction">
    <interactant intactId="EBI-740785">
        <id>P49639</id>
    </interactant>
    <interactant intactId="EBI-11960181">
        <id>A4D161</id>
        <label>FAM221A</label>
    </interactant>
    <organismsDiffer>false</organismsDiffer>
    <experiments>7</experiments>
</comment>
<comment type="interaction">
    <interactant intactId="EBI-740785">
        <id>P49639</id>
    </interactant>
    <interactant intactId="EBI-11956479">
        <id>P23142-4</id>
        <label>FBLN1</label>
    </interactant>
    <organismsDiffer>false</organismsDiffer>
    <experiments>3</experiments>
</comment>
<comment type="interaction">
    <interactant intactId="EBI-740785">
        <id>P49639</id>
    </interactant>
    <interactant intactId="EBI-741101">
        <id>Q13643</id>
        <label>FHL3</label>
    </interactant>
    <organismsDiffer>false</organismsDiffer>
    <experiments>3</experiments>
</comment>
<comment type="interaction">
    <interactant intactId="EBI-740785">
        <id>P49639</id>
    </interactant>
    <interactant intactId="EBI-750641">
        <id>Q5TD97</id>
        <label>FHL5</label>
    </interactant>
    <organismsDiffer>false</organismsDiffer>
    <experiments>3</experiments>
</comment>
<comment type="interaction">
    <interactant intactId="EBI-740785">
        <id>P49639</id>
    </interactant>
    <interactant intactId="EBI-1759806">
        <id>O75593</id>
        <label>FOXH1</label>
    </interactant>
    <organismsDiffer>false</organismsDiffer>
    <experiments>3</experiments>
</comment>
<comment type="interaction">
    <interactant intactId="EBI-740785">
        <id>P49639</id>
    </interactant>
    <interactant intactId="EBI-11319000">
        <id>O15353</id>
        <label>FOXN1</label>
    </interactant>
    <organismsDiffer>false</organismsDiffer>
    <experiments>3</experiments>
</comment>
<comment type="interaction">
    <interactant intactId="EBI-740785">
        <id>P49639</id>
    </interactant>
    <interactant intactId="EBI-725515">
        <id>O43559</id>
        <label>FRS3</label>
    </interactant>
    <organismsDiffer>false</organismsDiffer>
    <experiments>7</experiments>
</comment>
<comment type="interaction">
    <interactant intactId="EBI-740785">
        <id>P49639</id>
    </interactant>
    <interactant intactId="EBI-1571188">
        <id>P19883</id>
        <label>FST</label>
    </interactant>
    <organismsDiffer>false</organismsDiffer>
    <experiments>3</experiments>
</comment>
<comment type="interaction">
    <interactant intactId="EBI-740785">
        <id>P49639</id>
    </interactant>
    <interactant intactId="EBI-9050116">
        <id>Q9BTY2</id>
        <label>FUCA2</label>
    </interactant>
    <organismsDiffer>false</organismsDiffer>
    <experiments>3</experiments>
</comment>
<comment type="interaction">
    <interactant intactId="EBI-740785">
        <id>P49639</id>
    </interactant>
    <interactant intactId="EBI-1052570">
        <id>O95995</id>
        <label>GAS8</label>
    </interactant>
    <organismsDiffer>false</organismsDiffer>
    <experiments>3</experiments>
</comment>
<comment type="interaction">
    <interactant intactId="EBI-740785">
        <id>P49639</id>
    </interactant>
    <interactant intactId="EBI-3909284">
        <id>P15976</id>
        <label>GATA1</label>
    </interactant>
    <organismsDiffer>false</organismsDiffer>
    <experiments>3</experiments>
</comment>
<comment type="interaction">
    <interactant intactId="EBI-740785">
        <id>P49639</id>
    </interactant>
    <interactant intactId="EBI-9090198">
        <id>P15976-2</id>
        <label>GATA1</label>
    </interactant>
    <organismsDiffer>false</organismsDiffer>
    <experiments>3</experiments>
</comment>
<comment type="interaction">
    <interactant intactId="EBI-740785">
        <id>P49639</id>
    </interactant>
    <interactant intactId="EBI-10188645">
        <id>O75603</id>
        <label>GCM2</label>
    </interactant>
    <organismsDiffer>false</organismsDiffer>
    <experiments>3</experiments>
</comment>
<comment type="interaction">
    <interactant intactId="EBI-740785">
        <id>P49639</id>
    </interactant>
    <interactant intactId="EBI-2116863">
        <id>Q99988</id>
        <label>GDF15</label>
    </interactant>
    <organismsDiffer>false</organismsDiffer>
    <experiments>3</experiments>
</comment>
<comment type="interaction">
    <interactant intactId="EBI-740785">
        <id>P49639</id>
    </interactant>
    <interactant intactId="EBI-11975289">
        <id>Q9Y223-2</id>
        <label>GNE</label>
    </interactant>
    <organismsDiffer>false</organismsDiffer>
    <experiments>5</experiments>
</comment>
<comment type="interaction">
    <interactant intactId="EBI-740785">
        <id>P49639</id>
    </interactant>
    <interactant intactId="EBI-1754109">
        <id>P14770</id>
        <label>GP9</label>
    </interactant>
    <organismsDiffer>false</organismsDiffer>
    <experiments>4</experiments>
</comment>
<comment type="interaction">
    <interactant intactId="EBI-740785">
        <id>P49639</id>
    </interactant>
    <interactant intactId="EBI-11519926">
        <id>Q6PI77</id>
        <label>GPRASP3</label>
    </interactant>
    <organismsDiffer>false</organismsDiffer>
    <experiments>3</experiments>
</comment>
<comment type="interaction">
    <interactant intactId="EBI-740785">
        <id>P49639</id>
    </interactant>
    <interactant intactId="EBI-713355">
        <id>Q13227</id>
        <label>GPS2</label>
    </interactant>
    <organismsDiffer>false</organismsDiffer>
    <experiments>3</experiments>
</comment>
<comment type="interaction">
    <interactant intactId="EBI-740785">
        <id>P49639</id>
    </interactant>
    <interactant intactId="EBI-747754">
        <id>P28799</id>
        <label>GRN</label>
    </interactant>
    <organismsDiffer>false</organismsDiffer>
    <experiments>18</experiments>
</comment>
<comment type="interaction">
    <interactant intactId="EBI-740785">
        <id>P49639</id>
    </interactant>
    <interactant intactId="EBI-25860013">
        <id>P28799-2</id>
        <label>GRN</label>
    </interactant>
    <organismsDiffer>false</organismsDiffer>
    <experiments>3</experiments>
</comment>
<comment type="interaction">
    <interactant intactId="EBI-740785">
        <id>P49639</id>
    </interactant>
    <interactant intactId="EBI-353467">
        <id>P09211</id>
        <label>GSTP1</label>
    </interactant>
    <organismsDiffer>false</organismsDiffer>
    <experiments>3</experiments>
</comment>
<comment type="interaction">
    <interactant intactId="EBI-740785">
        <id>P49639</id>
    </interactant>
    <interactant intactId="EBI-11978177">
        <id>Q96NT3-2</id>
        <label>GUCD1</label>
    </interactant>
    <organismsDiffer>false</organismsDiffer>
    <experiments>5</experiments>
</comment>
<comment type="interaction">
    <interactant intactId="EBI-740785">
        <id>P49639</id>
    </interactant>
    <interactant intactId="EBI-7133736">
        <id>P07686</id>
        <label>HEXB</label>
    </interactant>
    <organismsDiffer>false</organismsDiffer>
    <experiments>3</experiments>
</comment>
<comment type="interaction">
    <interactant intactId="EBI-740785">
        <id>P49639</id>
    </interactant>
    <interactant intactId="EBI-5460660">
        <id>Q96MH2</id>
        <label>HEXIM2</label>
    </interactant>
    <organismsDiffer>false</organismsDiffer>
    <experiments>3</experiments>
</comment>
<comment type="interaction">
    <interactant intactId="EBI-740785">
        <id>P49639</id>
    </interactant>
    <interactant intactId="EBI-750630">
        <id>Q9UBP5</id>
        <label>HEY2</label>
    </interactant>
    <organismsDiffer>false</organismsDiffer>
    <experiments>3</experiments>
</comment>
<comment type="interaction">
    <interactant intactId="EBI-740785">
        <id>P49639</id>
    </interactant>
    <interactant intactId="EBI-740785">
        <id>P49639</id>
        <label>HOXA1</label>
    </interactant>
    <organismsDiffer>false</organismsDiffer>
    <experiments>6</experiments>
</comment>
<comment type="interaction">
    <interactant intactId="EBI-740785">
        <id>P49639</id>
    </interactant>
    <interactant intactId="EBI-745290">
        <id>P17482</id>
        <label>HOXB9</label>
    </interactant>
    <organismsDiffer>false</organismsDiffer>
    <experiments>3</experiments>
</comment>
<comment type="interaction">
    <interactant intactId="EBI-740785">
        <id>P49639</id>
    </interactant>
    <interactant intactId="EBI-2880706">
        <id>O43593</id>
        <label>HR</label>
    </interactant>
    <organismsDiffer>false</organismsDiffer>
    <experiments>3</experiments>
</comment>
<comment type="interaction">
    <interactant intactId="EBI-740785">
        <id>P49639</id>
    </interactant>
    <interactant intactId="EBI-3918847">
        <id>Q9H2F3</id>
        <label>HSD3B7</label>
    </interactant>
    <organismsDiffer>false</organismsDiffer>
    <experiments>3</experiments>
</comment>
<comment type="interaction">
    <interactant intactId="EBI-740785">
        <id>P49639</id>
    </interactant>
    <interactant intactId="EBI-1387094">
        <id>Q02535</id>
        <label>ID3</label>
    </interactant>
    <organismsDiffer>false</organismsDiffer>
    <experiments>3</experiments>
</comment>
<comment type="interaction">
    <interactant intactId="EBI-740785">
        <id>P49639</id>
    </interactant>
    <interactant intactId="EBI-3870426">
        <id>Q6UW32</id>
        <label>IGFL1</label>
    </interactant>
    <organismsDiffer>false</organismsDiffer>
    <experiments>3</experiments>
</comment>
<comment type="interaction">
    <interactant intactId="EBI-740785">
        <id>P49639</id>
    </interactant>
    <interactant intactId="EBI-11955401">
        <id>Q86VF2-5</id>
        <label>IGFN1</label>
    </interactant>
    <organismsDiffer>false</organismsDiffer>
    <experiments>3</experiments>
</comment>
<comment type="interaction">
    <interactant intactId="EBI-740785">
        <id>P49639</id>
    </interactant>
    <interactant intactId="EBI-6509505">
        <id>Q0VD86</id>
        <label>INCA1</label>
    </interactant>
    <organismsDiffer>false</organismsDiffer>
    <experiments>3</experiments>
</comment>
<comment type="interaction">
    <interactant intactId="EBI-740785">
        <id>P49639</id>
    </interactant>
    <interactant intactId="EBI-715611">
        <id>Q9C086</id>
        <label>INO80B</label>
    </interactant>
    <organismsDiffer>false</organismsDiffer>
    <experiments>5</experiments>
</comment>
<comment type="interaction">
    <interactant intactId="EBI-740785">
        <id>P49639</id>
    </interactant>
    <interactant intactId="EBI-12100506">
        <id>P78412</id>
        <label>IRX6</label>
    </interactant>
    <organismsDiffer>false</organismsDiffer>
    <experiments>3</experiments>
</comment>
<comment type="interaction">
    <interactant intactId="EBI-740785">
        <id>P49639</id>
    </interactant>
    <interactant intactId="EBI-11051601">
        <id>P16144-2</id>
        <label>ITGB4</label>
    </interactant>
    <organismsDiffer>false</organismsDiffer>
    <experiments>3</experiments>
</comment>
<comment type="interaction">
    <interactant intactId="EBI-740785">
        <id>P49639</id>
    </interactant>
    <interactant intactId="EBI-4397613">
        <id>Q7L273</id>
        <label>KCTD9</label>
    </interactant>
    <organismsDiffer>false</organismsDiffer>
    <experiments>5</experiments>
</comment>
<comment type="interaction">
    <interactant intactId="EBI-740785">
        <id>P49639</id>
    </interactant>
    <interactant intactId="EBI-10975473">
        <id>O60333-2</id>
        <label>KIF1B</label>
    </interactant>
    <organismsDiffer>false</organismsDiffer>
    <experiments>3</experiments>
</comment>
<comment type="interaction">
    <interactant intactId="EBI-740785">
        <id>P49639</id>
    </interactant>
    <interactant intactId="EBI-10981970">
        <id>Q5T749</id>
        <label>KPRP</label>
    </interactant>
    <organismsDiffer>false</organismsDiffer>
    <experiments>8</experiments>
</comment>
<comment type="interaction">
    <interactant intactId="EBI-740785">
        <id>P49639</id>
    </interactant>
    <interactant intactId="EBI-948001">
        <id>Q15323</id>
        <label>KRT31</label>
    </interactant>
    <organismsDiffer>false</organismsDiffer>
    <experiments>7</experiments>
</comment>
<comment type="interaction">
    <interactant intactId="EBI-740785">
        <id>P49639</id>
    </interactant>
    <interactant intactId="EBI-1049638">
        <id>Q14525</id>
        <label>KRT33B</label>
    </interactant>
    <organismsDiffer>false</organismsDiffer>
    <experiments>3</experiments>
</comment>
<comment type="interaction">
    <interactant intactId="EBI-740785">
        <id>P49639</id>
    </interactant>
    <interactant intactId="EBI-1047093">
        <id>O76011</id>
        <label>KRT34</label>
    </interactant>
    <organismsDiffer>false</organismsDiffer>
    <experiments>3</experiments>
</comment>
<comment type="interaction">
    <interactant intactId="EBI-740785">
        <id>P49639</id>
    </interactant>
    <interactant intactId="EBI-1058674">
        <id>Q92764</id>
        <label>KRT35</label>
    </interactant>
    <organismsDiffer>false</organismsDiffer>
    <experiments>3</experiments>
</comment>
<comment type="interaction">
    <interactant intactId="EBI-740785">
        <id>P49639</id>
    </interactant>
    <interactant intactId="EBI-1045716">
        <id>O76014</id>
        <label>KRT37</label>
    </interactant>
    <organismsDiffer>false</organismsDiffer>
    <experiments>3</experiments>
</comment>
<comment type="interaction">
    <interactant intactId="EBI-740785">
        <id>P49639</id>
    </interactant>
    <interactant intactId="EBI-1047263">
        <id>O76015</id>
        <label>KRT38</label>
    </interactant>
    <organismsDiffer>false</organismsDiffer>
    <experiments>6</experiments>
</comment>
<comment type="interaction">
    <interactant intactId="EBI-740785">
        <id>P49639</id>
    </interactant>
    <interactant intactId="EBI-10171697">
        <id>Q6A162</id>
        <label>KRT40</label>
    </interactant>
    <organismsDiffer>false</organismsDiffer>
    <experiments>3</experiments>
</comment>
<comment type="interaction">
    <interactant intactId="EBI-740785">
        <id>P49639</id>
    </interactant>
    <interactant intactId="EBI-739648">
        <id>Q14533</id>
        <label>KRT81</label>
    </interactant>
    <organismsDiffer>false</organismsDiffer>
    <experiments>5</experiments>
</comment>
<comment type="interaction">
    <interactant intactId="EBI-740785">
        <id>P49639</id>
    </interactant>
    <interactant intactId="EBI-1045341">
        <id>Q9NSB4</id>
        <label>KRT82</label>
    </interactant>
    <organismsDiffer>false</organismsDiffer>
    <experiments>3</experiments>
</comment>
<comment type="interaction">
    <interactant intactId="EBI-740785">
        <id>P49639</id>
    </interactant>
    <interactant intactId="EBI-10221390">
        <id>P78385</id>
        <label>KRT83</label>
    </interactant>
    <organismsDiffer>false</organismsDiffer>
    <experiments>8</experiments>
</comment>
<comment type="interaction">
    <interactant intactId="EBI-740785">
        <id>P49639</id>
    </interactant>
    <interactant intactId="EBI-11959885">
        <id>Q07627</id>
        <label>KRTAP1-1</label>
    </interactant>
    <organismsDiffer>false</organismsDiffer>
    <experiments>3</experiments>
</comment>
<comment type="interaction">
    <interactant intactId="EBI-740785">
        <id>P49639</id>
    </interactant>
    <interactant intactId="EBI-11749135">
        <id>Q8IUG1</id>
        <label>KRTAP1-3</label>
    </interactant>
    <organismsDiffer>false</organismsDiffer>
    <experiments>5</experiments>
</comment>
<comment type="interaction">
    <interactant intactId="EBI-740785">
        <id>P49639</id>
    </interactant>
    <interactant intactId="EBI-11741292">
        <id>Q9BYS1</id>
        <label>KRTAP1-5</label>
    </interactant>
    <organismsDiffer>false</organismsDiffer>
    <experiments>5</experiments>
</comment>
<comment type="interaction">
    <interactant intactId="EBI-740785">
        <id>P49639</id>
    </interactant>
    <interactant intactId="EBI-11955579">
        <id>P60014</id>
        <label>KRTAP10-10</label>
    </interactant>
    <organismsDiffer>false</organismsDiffer>
    <experiments>3</experiments>
</comment>
<comment type="interaction">
    <interactant intactId="EBI-740785">
        <id>P49639</id>
    </interactant>
    <interactant intactId="EBI-10217483">
        <id>P60412</id>
        <label>KRTAP10-11</label>
    </interactant>
    <organismsDiffer>false</organismsDiffer>
    <experiments>9</experiments>
</comment>
<comment type="interaction">
    <interactant intactId="EBI-740785">
        <id>P49639</id>
    </interactant>
    <interactant intactId="EBI-10178153">
        <id>P60372</id>
        <label>KRTAP10-4</label>
    </interactant>
    <organismsDiffer>false</organismsDiffer>
    <experiments>3</experiments>
</comment>
<comment type="interaction">
    <interactant intactId="EBI-740785">
        <id>P49639</id>
    </interactant>
    <interactant intactId="EBI-10172150">
        <id>P60370</id>
        <label>KRTAP10-5</label>
    </interactant>
    <organismsDiffer>false</organismsDiffer>
    <experiments>6</experiments>
</comment>
<comment type="interaction">
    <interactant intactId="EBI-740785">
        <id>P49639</id>
    </interactant>
    <interactant intactId="EBI-10172290">
        <id>P60409</id>
        <label>KRTAP10-7</label>
    </interactant>
    <organismsDiffer>false</organismsDiffer>
    <experiments>5</experiments>
</comment>
<comment type="interaction">
    <interactant intactId="EBI-740785">
        <id>P49639</id>
    </interactant>
    <interactant intactId="EBI-10171774">
        <id>P60410</id>
        <label>KRTAP10-8</label>
    </interactant>
    <organismsDiffer>false</organismsDiffer>
    <experiments>9</experiments>
</comment>
<comment type="interaction">
    <interactant intactId="EBI-740785">
        <id>P49639</id>
    </interactant>
    <interactant intactId="EBI-10172052">
        <id>P60411</id>
        <label>KRTAP10-9</label>
    </interactant>
    <organismsDiffer>false</organismsDiffer>
    <experiments>8</experiments>
</comment>
<comment type="interaction">
    <interactant intactId="EBI-740785">
        <id>P49639</id>
    </interactant>
    <interactant intactId="EBI-1052037">
        <id>Q8IUC1</id>
        <label>KRTAP11-1</label>
    </interactant>
    <organismsDiffer>false</organismsDiffer>
    <experiments>5</experiments>
</comment>
<comment type="interaction">
    <interactant intactId="EBI-740785">
        <id>P49639</id>
    </interactant>
    <interactant intactId="EBI-10210845">
        <id>P59990</id>
        <label>KRTAP12-1</label>
    </interactant>
    <organismsDiffer>false</organismsDiffer>
    <experiments>13</experiments>
</comment>
<comment type="interaction">
    <interactant intactId="EBI-740785">
        <id>P49639</id>
    </interactant>
    <interactant intactId="EBI-10176379">
        <id>P59991</id>
        <label>KRTAP12-2</label>
    </interactant>
    <organismsDiffer>false</organismsDiffer>
    <experiments>3</experiments>
</comment>
<comment type="interaction">
    <interactant intactId="EBI-740785">
        <id>P49639</id>
    </interactant>
    <interactant intactId="EBI-11953334">
        <id>P60328</id>
        <label>KRTAP12-3</label>
    </interactant>
    <organismsDiffer>false</organismsDiffer>
    <experiments>6</experiments>
</comment>
<comment type="interaction">
    <interactant intactId="EBI-740785">
        <id>P49639</id>
    </interactant>
    <interactant intactId="EBI-10176396">
        <id>P60329</id>
        <label>KRTAP12-4</label>
    </interactant>
    <organismsDiffer>false</organismsDiffer>
    <experiments>10</experiments>
</comment>
<comment type="interaction">
    <interactant intactId="EBI-740785">
        <id>P49639</id>
    </interactant>
    <interactant intactId="EBI-11953846">
        <id>Q52LG2</id>
        <label>KRTAP13-2</label>
    </interactant>
    <organismsDiffer>false</organismsDiffer>
    <experiments>5</experiments>
</comment>
<comment type="interaction">
    <interactant intactId="EBI-740785">
        <id>P49639</id>
    </interactant>
    <interactant intactId="EBI-10241252">
        <id>Q3SY46</id>
        <label>KRTAP13-3</label>
    </interactant>
    <organismsDiffer>false</organismsDiffer>
    <experiments>3</experiments>
</comment>
<comment type="interaction">
    <interactant intactId="EBI-740785">
        <id>P49639</id>
    </interactant>
    <interactant intactId="EBI-11953996">
        <id>Q3LI77</id>
        <label>KRTAP13-4</label>
    </interactant>
    <organismsDiffer>false</organismsDiffer>
    <experiments>3</experiments>
</comment>
<comment type="interaction">
    <interactant intactId="EBI-740785">
        <id>P49639</id>
    </interactant>
    <interactant intactId="EBI-11992140">
        <id>Q3LI76</id>
        <label>KRTAP15-1</label>
    </interactant>
    <organismsDiffer>false</organismsDiffer>
    <experiments>7</experiments>
</comment>
<comment type="interaction">
    <interactant intactId="EBI-740785">
        <id>P49639</id>
    </interactant>
    <interactant intactId="EBI-12805508">
        <id>Q3LI70</id>
        <label>KRTAP19-6</label>
    </interactant>
    <organismsDiffer>false</organismsDiffer>
    <experiments>3</experiments>
</comment>
<comment type="interaction">
    <interactant intactId="EBI-740785">
        <id>P49639</id>
    </interactant>
    <interactant intactId="EBI-10241353">
        <id>Q3SYF9</id>
        <label>KRTAP19-7</label>
    </interactant>
    <organismsDiffer>false</organismsDiffer>
    <experiments>3</experiments>
</comment>
<comment type="interaction">
    <interactant intactId="EBI-740785">
        <id>P49639</id>
    </interactant>
    <interactant intactId="EBI-14065470">
        <id>Q9BYR9</id>
        <label>KRTAP2-4</label>
    </interactant>
    <organismsDiffer>false</organismsDiffer>
    <experiments>3</experiments>
</comment>
<comment type="interaction">
    <interactant intactId="EBI-740785">
        <id>P49639</id>
    </interactant>
    <interactant intactId="EBI-10171734">
        <id>A1A580</id>
        <label>KRTAP23-1</label>
    </interactant>
    <organismsDiffer>false</organismsDiffer>
    <experiments>3</experiments>
</comment>
<comment type="interaction">
    <interactant intactId="EBI-740785">
        <id>P49639</id>
    </interactant>
    <interactant intactId="EBI-3957672">
        <id>Q6PEX3</id>
        <label>KRTAP26-1</label>
    </interactant>
    <organismsDiffer>false</organismsDiffer>
    <experiments>8</experiments>
</comment>
<comment type="interaction">
    <interactant intactId="EBI-740785">
        <id>P49639</id>
    </interactant>
    <interactant intactId="EBI-751260">
        <id>Q9BYR7</id>
        <label>KRTAP3-2</label>
    </interactant>
    <organismsDiffer>false</organismsDiffer>
    <experiments>6</experiments>
</comment>
<comment type="interaction">
    <interactant intactId="EBI-740785">
        <id>P49639</id>
    </interactant>
    <interactant intactId="EBI-3957694">
        <id>Q9BYR6</id>
        <label>KRTAP3-3</label>
    </interactant>
    <organismsDiffer>false</organismsDiffer>
    <experiments>3</experiments>
</comment>
<comment type="interaction">
    <interactant intactId="EBI-740785">
        <id>P49639</id>
    </interactant>
    <interactant intactId="EBI-34579671">
        <id>Q9BYQ7</id>
        <label>KRTAP4-1</label>
    </interactant>
    <organismsDiffer>false</organismsDiffer>
    <experiments>3</experiments>
</comment>
<comment type="interaction">
    <interactant intactId="EBI-740785">
        <id>P49639</id>
    </interactant>
    <interactant intactId="EBI-10302392">
        <id>Q9BYQ6</id>
        <label>KRTAP4-11</label>
    </interactant>
    <organismsDiffer>false</organismsDiffer>
    <experiments>11</experiments>
</comment>
<comment type="interaction">
    <interactant intactId="EBI-740785">
        <id>P49639</id>
    </interactant>
    <interactant intactId="EBI-739863">
        <id>Q9BQ66</id>
        <label>KRTAP4-12</label>
    </interactant>
    <organismsDiffer>false</organismsDiffer>
    <experiments>9</experiments>
</comment>
<comment type="interaction">
    <interactant intactId="EBI-740785">
        <id>P49639</id>
    </interactant>
    <interactant intactId="EBI-10172511">
        <id>Q9BYR5</id>
        <label>KRTAP4-2</label>
    </interactant>
    <organismsDiffer>false</organismsDiffer>
    <experiments>10</experiments>
</comment>
<comment type="interaction">
    <interactant intactId="EBI-740785">
        <id>P49639</id>
    </interactant>
    <interactant intactId="EBI-11958132">
        <id>Q9BYR3</id>
        <label>KRTAP4-4</label>
    </interactant>
    <organismsDiffer>false</organismsDiffer>
    <experiments>5</experiments>
</comment>
<comment type="interaction">
    <interactant intactId="EBI-740785">
        <id>P49639</id>
    </interactant>
    <interactant intactId="EBI-11993254">
        <id>Q9BYR2</id>
        <label>KRTAP4-5</label>
    </interactant>
    <organismsDiffer>false</organismsDiffer>
    <experiments>7</experiments>
</comment>
<comment type="interaction">
    <interactant intactId="EBI-740785">
        <id>P49639</id>
    </interactant>
    <interactant intactId="EBI-10302547">
        <id>Q9BYR0</id>
        <label>KRTAP4-7</label>
    </interactant>
    <organismsDiffer>false</organismsDiffer>
    <experiments>3</experiments>
</comment>
<comment type="interaction">
    <interactant intactId="EBI-740785">
        <id>P49639</id>
    </interactant>
    <interactant intactId="EBI-11993296">
        <id>Q6L8G4</id>
        <label>KRTAP5-11</label>
    </interactant>
    <organismsDiffer>false</organismsDiffer>
    <experiments>5</experiments>
</comment>
<comment type="interaction">
    <interactant intactId="EBI-740785">
        <id>P49639</id>
    </interactant>
    <interactant intactId="EBI-11958178">
        <id>Q701N4</id>
        <label>KRTAP5-2</label>
    </interactant>
    <organismsDiffer>false</organismsDiffer>
    <experiments>5</experiments>
</comment>
<comment type="interaction">
    <interactant intactId="EBI-740785">
        <id>P49639</id>
    </interactant>
    <interactant intactId="EBI-11974251">
        <id>Q6L8H2</id>
        <label>KRTAP5-3</label>
    </interactant>
    <organismsDiffer>false</organismsDiffer>
    <experiments>5</experiments>
</comment>
<comment type="interaction">
    <interactant intactId="EBI-740785">
        <id>P49639</id>
    </interactant>
    <interactant intactId="EBI-11963072">
        <id>Q6L8H1</id>
        <label>KRTAP5-4</label>
    </interactant>
    <organismsDiffer>false</organismsDiffer>
    <experiments>8</experiments>
</comment>
<comment type="interaction">
    <interactant intactId="EBI-740785">
        <id>P49639</id>
    </interactant>
    <interactant intactId="EBI-10250562">
        <id>Q6L8G9</id>
        <label>KRTAP5-6</label>
    </interactant>
    <organismsDiffer>false</organismsDiffer>
    <experiments>9</experiments>
</comment>
<comment type="interaction">
    <interactant intactId="EBI-740785">
        <id>P49639</id>
    </interactant>
    <interactant intactId="EBI-3958099">
        <id>P26371</id>
        <label>KRTAP5-9</label>
    </interactant>
    <organismsDiffer>false</organismsDiffer>
    <experiments>12</experiments>
</comment>
<comment type="interaction">
    <interactant intactId="EBI-740785">
        <id>P49639</id>
    </interactant>
    <interactant intactId="EBI-12111050">
        <id>Q3LI64</id>
        <label>KRTAP6-1</label>
    </interactant>
    <organismsDiffer>false</organismsDiffer>
    <experiments>3</experiments>
</comment>
<comment type="interaction">
    <interactant intactId="EBI-740785">
        <id>P49639</id>
    </interactant>
    <interactant intactId="EBI-11962084">
        <id>Q3LI66</id>
        <label>KRTAP6-2</label>
    </interactant>
    <organismsDiffer>false</organismsDiffer>
    <experiments>3</experiments>
</comment>
<comment type="interaction">
    <interactant intactId="EBI-740785">
        <id>P49639</id>
    </interactant>
    <interactant intactId="EBI-22311199">
        <id>Q3LI67</id>
        <label>KRTAP6-3</label>
    </interactant>
    <organismsDiffer>false</organismsDiffer>
    <experiments>6</experiments>
</comment>
<comment type="interaction">
    <interactant intactId="EBI-740785">
        <id>P49639</id>
    </interactant>
    <interactant intactId="EBI-1044640">
        <id>Q9BYQ4</id>
        <label>KRTAP9-2</label>
    </interactant>
    <organismsDiffer>false</organismsDiffer>
    <experiments>13</experiments>
</comment>
<comment type="interaction">
    <interactant intactId="EBI-740785">
        <id>P49639</id>
    </interactant>
    <interactant intactId="EBI-1043191">
        <id>Q9BYQ3</id>
        <label>KRTAP9-3</label>
    </interactant>
    <organismsDiffer>false</organismsDiffer>
    <experiments>8</experiments>
</comment>
<comment type="interaction">
    <interactant intactId="EBI-740785">
        <id>P49639</id>
    </interactant>
    <interactant intactId="EBI-10185730">
        <id>Q9BYQ2</id>
        <label>KRTAP9-4</label>
    </interactant>
    <organismsDiffer>false</organismsDiffer>
    <experiments>3</experiments>
</comment>
<comment type="interaction">
    <interactant intactId="EBI-740785">
        <id>P49639</id>
    </interactant>
    <interactant intactId="EBI-11958364">
        <id>Q9BYQ0</id>
        <label>KRTAP9-8</label>
    </interactant>
    <organismsDiffer>false</organismsDiffer>
    <experiments>8</experiments>
</comment>
<comment type="interaction">
    <interactant intactId="EBI-740785">
        <id>P49639</id>
    </interactant>
    <interactant intactId="EBI-9088686">
        <id>Q14847-2</id>
        <label>LASP1</label>
    </interactant>
    <organismsDiffer>false</organismsDiffer>
    <experiments>3</experiments>
</comment>
<comment type="interaction">
    <interactant intactId="EBI-740785">
        <id>P49639</id>
    </interactant>
    <interactant intactId="EBI-11962058">
        <id>Q5T7P2</id>
        <label>LCE1A</label>
    </interactant>
    <organismsDiffer>false</organismsDiffer>
    <experiments>6</experiments>
</comment>
<comment type="interaction">
    <interactant intactId="EBI-740785">
        <id>P49639</id>
    </interactant>
    <interactant intactId="EBI-10245913">
        <id>Q5T7P3</id>
        <label>LCE1B</label>
    </interactant>
    <organismsDiffer>false</organismsDiffer>
    <experiments>13</experiments>
</comment>
<comment type="interaction">
    <interactant intactId="EBI-740785">
        <id>P49639</id>
    </interactant>
    <interactant intactId="EBI-12224199">
        <id>Q5T751</id>
        <label>LCE1C</label>
    </interactant>
    <organismsDiffer>false</organismsDiffer>
    <experiments>3</experiments>
</comment>
<comment type="interaction">
    <interactant intactId="EBI-740785">
        <id>P49639</id>
    </interactant>
    <interactant intactId="EBI-11741311">
        <id>Q5T752</id>
        <label>LCE1D</label>
    </interactant>
    <organismsDiffer>false</organismsDiffer>
    <experiments>5</experiments>
</comment>
<comment type="interaction">
    <interactant intactId="EBI-740785">
        <id>P49639</id>
    </interactant>
    <interactant intactId="EBI-11958008">
        <id>Q5T754</id>
        <label>LCE1F</label>
    </interactant>
    <organismsDiffer>false</organismsDiffer>
    <experiments>6</experiments>
</comment>
<comment type="interaction">
    <interactant intactId="EBI-740785">
        <id>P49639</id>
    </interactant>
    <interactant intactId="EBI-10246607">
        <id>Q5TA79</id>
        <label>LCE2A</label>
    </interactant>
    <organismsDiffer>false</organismsDiffer>
    <experiments>3</experiments>
</comment>
<comment type="interaction">
    <interactant intactId="EBI-740785">
        <id>P49639</id>
    </interactant>
    <interactant intactId="EBI-11478468">
        <id>O14633</id>
        <label>LCE2B</label>
    </interactant>
    <organismsDiffer>false</organismsDiffer>
    <experiments>5</experiments>
</comment>
<comment type="interaction">
    <interactant intactId="EBI-740785">
        <id>P49639</id>
    </interactant>
    <interactant intactId="EBI-11973993">
        <id>Q5TA81</id>
        <label>LCE2C</label>
    </interactant>
    <organismsDiffer>false</organismsDiffer>
    <experiments>8</experiments>
</comment>
<comment type="interaction">
    <interactant intactId="EBI-740785">
        <id>P49639</id>
    </interactant>
    <interactant intactId="EBI-10246750">
        <id>Q5TA82</id>
        <label>LCE2D</label>
    </interactant>
    <organismsDiffer>false</organismsDiffer>
    <experiments>8</experiments>
</comment>
<comment type="interaction">
    <interactant intactId="EBI-740785">
        <id>P49639</id>
    </interactant>
    <interactant intactId="EBI-10245291">
        <id>Q5T5A8</id>
        <label>LCE3C</label>
    </interactant>
    <organismsDiffer>false</organismsDiffer>
    <experiments>3</experiments>
</comment>
<comment type="interaction">
    <interactant intactId="EBI-740785">
        <id>P49639</id>
    </interactant>
    <interactant intactId="EBI-10245456">
        <id>Q5T5B0</id>
        <label>LCE3E</label>
    </interactant>
    <organismsDiffer>false</organismsDiffer>
    <experiments>3</experiments>
</comment>
<comment type="interaction">
    <interactant intactId="EBI-740785">
        <id>P49639</id>
    </interactant>
    <interactant intactId="EBI-10246358">
        <id>Q5TA78</id>
        <label>LCE4A</label>
    </interactant>
    <organismsDiffer>false</organismsDiffer>
    <experiments>9</experiments>
</comment>
<comment type="interaction">
    <interactant intactId="EBI-740785">
        <id>P49639</id>
    </interactant>
    <interactant intactId="EBI-11955689">
        <id>Q5TCM9</id>
        <label>LCE5A</label>
    </interactant>
    <organismsDiffer>false</organismsDiffer>
    <experiments>8</experiments>
</comment>
<comment type="interaction">
    <interactant intactId="EBI-740785">
        <id>P49639</id>
    </interactant>
    <interactant intactId="EBI-3957707">
        <id>Q9UHV8</id>
        <label>LGALS13</label>
    </interactant>
    <organismsDiffer>false</organismsDiffer>
    <experiments>6</experiments>
</comment>
<comment type="interaction">
    <interactant intactId="EBI-740785">
        <id>P49639</id>
    </interactant>
    <interactant intactId="EBI-720805">
        <id>P56470</id>
        <label>LGALS4</label>
    </interactant>
    <organismsDiffer>false</organismsDiffer>
    <experiments>3</experiments>
</comment>
<comment type="interaction">
    <interactant intactId="EBI-740785">
        <id>P49639</id>
    </interactant>
    <interactant intactId="EBI-10258690">
        <id>O60663-2</id>
        <label>LMX1B</label>
    </interactant>
    <organismsDiffer>false</organismsDiffer>
    <experiments>3</experiments>
</comment>
<comment type="interaction">
    <interactant intactId="EBI-740785">
        <id>P49639</id>
    </interactant>
    <interactant intactId="EBI-739832">
        <id>Q8TBB1</id>
        <label>LNX1</label>
    </interactant>
    <organismsDiffer>false</organismsDiffer>
    <experiments>3</experiments>
</comment>
<comment type="interaction">
    <interactant intactId="EBI-740785">
        <id>P49639</id>
    </interactant>
    <interactant intactId="EBI-2341787">
        <id>Q17RB8</id>
        <label>LONRF1</label>
    </interactant>
    <organismsDiffer>false</organismsDiffer>
    <experiments>3</experiments>
</comment>
<comment type="interaction">
    <interactant intactId="EBI-740785">
        <id>P49639</id>
    </interactant>
    <interactant intactId="EBI-2683507">
        <id>Q8N5G2</id>
        <label>MACO1</label>
    </interactant>
    <organismsDiffer>false</organismsDiffer>
    <experiments>3</experiments>
</comment>
<comment type="interaction">
    <interactant intactId="EBI-740785">
        <id>P49639</id>
    </interactant>
    <interactant intactId="EBI-947402">
        <id>O60336</id>
        <label>MAPKBP1</label>
    </interactant>
    <organismsDiffer>false</organismsDiffer>
    <experiments>5</experiments>
</comment>
<comment type="interaction">
    <interactant intactId="EBI-740785">
        <id>P49639</id>
    </interactant>
    <interactant intactId="EBI-724076">
        <id>Q99750</id>
        <label>MDFI</label>
    </interactant>
    <organismsDiffer>false</organismsDiffer>
    <experiments>7</experiments>
</comment>
<comment type="interaction">
    <interactant intactId="EBI-740785">
        <id>P49639</id>
    </interactant>
    <interactant intactId="EBI-2462387">
        <id>P55001</id>
        <label>MFAP2</label>
    </interactant>
    <organismsDiffer>false</organismsDiffer>
    <experiments>3</experiments>
</comment>
<comment type="interaction">
    <interactant intactId="EBI-740785">
        <id>P49639</id>
    </interactant>
    <interactant intactId="EBI-2340269">
        <id>Q13064</id>
        <label>MKRN3</label>
    </interactant>
    <organismsDiffer>false</organismsDiffer>
    <experiments>3</experiments>
</comment>
<comment type="interaction">
    <interactant intactId="EBI-740785">
        <id>P49639</id>
    </interactant>
    <interactant intactId="EBI-7950783">
        <id>Q96JP2</id>
        <label>MYO15B</label>
    </interactant>
    <organismsDiffer>false</organismsDiffer>
    <experiments>3</experiments>
</comment>
<comment type="interaction">
    <interactant intactId="EBI-740785">
        <id>P49639</id>
    </interactant>
    <interactant intactId="EBI-2858213">
        <id>Q86VE0</id>
        <label>MYPOP</label>
    </interactant>
    <organismsDiffer>false</organismsDiffer>
    <experiments>3</experiments>
</comment>
<comment type="interaction">
    <interactant intactId="EBI-740785">
        <id>P49639</id>
    </interactant>
    <interactant intactId="EBI-2514973">
        <id>Q92802</id>
        <label>N4BP2L2</label>
    </interactant>
    <organismsDiffer>false</organismsDiffer>
    <experiments>3</experiments>
</comment>
<comment type="interaction">
    <interactant intactId="EBI-740785">
        <id>P49639</id>
    </interactant>
    <interactant intactId="EBI-713635">
        <id>O43639</id>
        <label>NCK2</label>
    </interactant>
    <organismsDiffer>false</organismsDiffer>
    <experiments>3</experiments>
</comment>
<comment type="interaction">
    <interactant intactId="EBI-740785">
        <id>P49639</id>
    </interactant>
    <interactant intactId="EBI-6979889">
        <id>Q92692-2</id>
        <label>NECTIN2</label>
    </interactant>
    <organismsDiffer>false</organismsDiffer>
    <experiments>3</experiments>
</comment>
<comment type="interaction">
    <interactant intactId="EBI-740785">
        <id>P49639</id>
    </interactant>
    <interactant intactId="EBI-11746523">
        <id>Q14511-2</id>
        <label>NEDD9</label>
    </interactant>
    <organismsDiffer>false</organismsDiffer>
    <experiments>3</experiments>
</comment>
<comment type="interaction">
    <interactant intactId="EBI-740785">
        <id>P49639</id>
    </interactant>
    <interactant intactId="EBI-11750983">
        <id>Q9HC98-4</id>
        <label>NEK6</label>
    </interactant>
    <organismsDiffer>false</organismsDiffer>
    <experiments>3</experiments>
</comment>
<comment type="interaction">
    <interactant intactId="EBI-740785">
        <id>P49639</id>
    </interactant>
    <interactant intactId="EBI-946274">
        <id>Q99435</id>
        <label>NELL2</label>
    </interactant>
    <organismsDiffer>false</organismsDiffer>
    <experiments>2</experiments>
</comment>
<comment type="interaction">
    <interactant intactId="EBI-740785">
        <id>P49639</id>
    </interactant>
    <interactant intactId="EBI-17754404">
        <id>Q99435-2</id>
        <label>NELL2</label>
    </interactant>
    <organismsDiffer>false</organismsDiffer>
    <experiments>3</experiments>
</comment>
<comment type="interaction">
    <interactant intactId="EBI-740785">
        <id>P49639</id>
    </interactant>
    <interactant intactId="EBI-10271199">
        <id>Q8NI38</id>
        <label>NFKBID</label>
    </interactant>
    <organismsDiffer>false</organismsDiffer>
    <experiments>3</experiments>
</comment>
<comment type="interaction">
    <interactant intactId="EBI-740785">
        <id>P49639</id>
    </interactant>
    <interactant intactId="EBI-945833">
        <id>Q7Z3S9</id>
        <label>NOTCH2NLA</label>
    </interactant>
    <organismsDiffer>false</organismsDiffer>
    <experiments>3</experiments>
</comment>
<comment type="interaction">
    <interactant intactId="EBI-740785">
        <id>P49639</id>
    </interactant>
    <interactant intactId="EBI-22310682">
        <id>P0DPK4</id>
        <label>NOTCH2NLC</label>
    </interactant>
    <organismsDiffer>false</organismsDiffer>
    <experiments>3</experiments>
</comment>
<comment type="interaction">
    <interactant intactId="EBI-740785">
        <id>P49639</id>
    </interactant>
    <interactant intactId="EBI-10250949">
        <id>Q6NSM0</id>
        <label>NR1D2</label>
    </interactant>
    <organismsDiffer>false</organismsDiffer>
    <experiments>5</experiments>
</comment>
<comment type="interaction">
    <interactant intactId="EBI-740785">
        <id>P49639</id>
    </interactant>
    <interactant intactId="EBI-743459">
        <id>Q9HB63</id>
        <label>NTN4</label>
    </interactant>
    <organismsDiffer>false</organismsDiffer>
    <experiments>5</experiments>
</comment>
<comment type="interaction">
    <interactant intactId="EBI-740785">
        <id>P49639</id>
    </interactant>
    <interactant intactId="EBI-398874">
        <id>Q9UBU9</id>
        <label>NXF1</label>
    </interactant>
    <organismsDiffer>false</organismsDiffer>
    <experiments>3</experiments>
</comment>
<comment type="interaction">
    <interactant intactId="EBI-740785">
        <id>P49639</id>
    </interactant>
    <interactant intactId="EBI-10234557">
        <id>Q14990</id>
        <label>ODF1</label>
    </interactant>
    <organismsDiffer>false</organismsDiffer>
    <experiments>3</experiments>
</comment>
<comment type="interaction">
    <interactant intactId="EBI-740785">
        <id>P49639</id>
    </interactant>
    <interactant intactId="EBI-10277776">
        <id>Q8WWZ8</id>
        <label>OIT3</label>
    </interactant>
    <organismsDiffer>false</organismsDiffer>
    <experiments>5</experiments>
</comment>
<comment type="interaction">
    <interactant intactId="EBI-740785">
        <id>P49639</id>
    </interactant>
    <interactant intactId="EBI-10235794">
        <id>Q15077</id>
        <label>P2RY6</label>
    </interactant>
    <organismsDiffer>false</organismsDiffer>
    <experiments>5</experiments>
</comment>
<comment type="interaction">
    <interactant intactId="EBI-740785">
        <id>P49639</id>
    </interactant>
    <interactant intactId="EBI-747278">
        <id>P26367</id>
        <label>PAX6</label>
    </interactant>
    <organismsDiffer>false</organismsDiffer>
    <experiments>3</experiments>
</comment>
<comment type="interaction">
    <interactant intactId="EBI-740785">
        <id>P49639</id>
    </interactant>
    <interactant intactId="EBI-348489">
        <id>P40425</id>
        <label>PBX2</label>
    </interactant>
    <organismsDiffer>false</organismsDiffer>
    <experiments>3</experiments>
</comment>
<comment type="interaction">
    <interactant intactId="EBI-740785">
        <id>P49639</id>
    </interactant>
    <interactant intactId="EBI-11956269">
        <id>Q92824-2</id>
        <label>PCSK5</label>
    </interactant>
    <organismsDiffer>false</organismsDiffer>
    <experiments>5</experiments>
</comment>
<comment type="interaction">
    <interactant intactId="EBI-740785">
        <id>P49639</id>
    </interactant>
    <interactant intactId="EBI-2908417">
        <id>Q9UHG3</id>
        <label>PCYOX1</label>
    </interactant>
    <organismsDiffer>false</organismsDiffer>
    <experiments>3</experiments>
</comment>
<comment type="interaction">
    <interactant intactId="EBI-740785">
        <id>P49639</id>
    </interactant>
    <interactant intactId="EBI-14131832">
        <id>Q8N4B1-4</id>
        <label>PHETA1</label>
    </interactant>
    <organismsDiffer>false</organismsDiffer>
    <experiments>3</experiments>
</comment>
<comment type="interaction">
    <interactant intactId="EBI-740785">
        <id>P49639</id>
    </interactant>
    <interactant intactId="EBI-714158">
        <id>Q13526</id>
        <label>PIN1</label>
    </interactant>
    <organismsDiffer>false</organismsDiffer>
    <experiments>5</experiments>
</comment>
<comment type="interaction">
    <interactant intactId="EBI-740785">
        <id>P49639</id>
    </interactant>
    <interactant intactId="EBI-748265">
        <id>P78337</id>
        <label>PITX1</label>
    </interactant>
    <organismsDiffer>false</organismsDiffer>
    <experiments>5</experiments>
</comment>
<comment type="interaction">
    <interactant intactId="EBI-740785">
        <id>P49639</id>
    </interactant>
    <interactant intactId="EBI-12138495">
        <id>Q99697-2</id>
        <label>PITX2</label>
    </interactant>
    <organismsDiffer>false</organismsDiffer>
    <experiments>3</experiments>
</comment>
<comment type="interaction">
    <interactant intactId="EBI-740785">
        <id>P49639</id>
    </interactant>
    <interactant intactId="EBI-12014286">
        <id>Q494U1-3</id>
        <label>PLEKHN1</label>
    </interactant>
    <organismsDiffer>false</organismsDiffer>
    <experiments>3</experiments>
</comment>
<comment type="interaction">
    <interactant intactId="EBI-740785">
        <id>P49639</id>
    </interactant>
    <interactant intactId="EBI-3919291">
        <id>Q9Y342</id>
        <label>PLLP</label>
    </interactant>
    <organismsDiffer>false</organismsDiffer>
    <experiments>3</experiments>
</comment>
<comment type="interaction">
    <interactant intactId="EBI-740785">
        <id>P49639</id>
    </interactant>
    <interactant intactId="EBI-3937430">
        <id>Q9NRY7</id>
        <label>PLSCR2</label>
    </interactant>
    <organismsDiffer>false</organismsDiffer>
    <experiments>3</experiments>
</comment>
<comment type="interaction">
    <interactant intactId="EBI-740785">
        <id>P49639</id>
    </interactant>
    <interactant intactId="EBI-750734">
        <id>Q9NRY6</id>
        <label>PLSCR3</label>
    </interactant>
    <organismsDiffer>false</organismsDiffer>
    <experiments>5</experiments>
</comment>
<comment type="interaction">
    <interactant intactId="EBI-740785">
        <id>P49639</id>
    </interactant>
    <interactant intactId="EBI-769257">
        <id>Q9NRQ2</id>
        <label>PLSCR4</label>
    </interactant>
    <organismsDiffer>false</organismsDiffer>
    <experiments>5</experiments>
</comment>
<comment type="interaction">
    <interactant intactId="EBI-740785">
        <id>P49639</id>
    </interactant>
    <interactant intactId="EBI-977302">
        <id>P04156</id>
        <label>PRNP</label>
    </interactant>
    <organismsDiffer>false</organismsDiffer>
    <experiments>4</experiments>
</comment>
<comment type="interaction">
    <interactant intactId="EBI-740785">
        <id>P49639</id>
    </interactant>
    <interactant intactId="EBI-9027467">
        <id>O75360</id>
        <label>PROP1</label>
    </interactant>
    <organismsDiffer>false</organismsDiffer>
    <experiments>3</experiments>
</comment>
<comment type="interaction">
    <interactant intactId="EBI-740785">
        <id>P49639</id>
    </interactant>
    <interactant intactId="EBI-372273">
        <id>P20618</id>
        <label>PSMB1</label>
    </interactant>
    <organismsDiffer>false</organismsDiffer>
    <experiments>3</experiments>
</comment>
<comment type="interaction">
    <interactant intactId="EBI-740785">
        <id>P49639</id>
    </interactant>
    <interactant intactId="EBI-2860297">
        <id>Q03431</id>
        <label>PTH1R</label>
    </interactant>
    <organismsDiffer>false</organismsDiffer>
    <experiments>3</experiments>
</comment>
<comment type="interaction">
    <interactant intactId="EBI-740785">
        <id>P49639</id>
    </interactant>
    <interactant intactId="EBI-3919694">
        <id>P15151</id>
        <label>PVR</label>
    </interactant>
    <organismsDiffer>false</organismsDiffer>
    <experiments>3</experiments>
</comment>
<comment type="interaction">
    <interactant intactId="EBI-740785">
        <id>P49639</id>
    </interactant>
    <interactant intactId="EBI-347462">
        <id>P47897</id>
        <label>QARS1</label>
    </interactant>
    <organismsDiffer>false</organismsDiffer>
    <experiments>3</experiments>
</comment>
<comment type="interaction">
    <interactant intactId="EBI-740785">
        <id>P49639</id>
    </interactant>
    <interactant intactId="EBI-12005546">
        <id>Q12967-6</id>
        <label>RALGDS</label>
    </interactant>
    <organismsDiffer>false</organismsDiffer>
    <experiments>3</experiments>
</comment>
<comment type="interaction">
    <interactant intactId="EBI-740785">
        <id>P49639</id>
    </interactant>
    <interactant intactId="EBI-12806054">
        <id>P10745</id>
        <label>RBP3</label>
    </interactant>
    <organismsDiffer>false</organismsDiffer>
    <experiments>3</experiments>
</comment>
<comment type="interaction">
    <interactant intactId="EBI-740785">
        <id>P49639</id>
    </interactant>
    <interactant intactId="EBI-740322">
        <id>Q93062</id>
        <label>RBPMS</label>
    </interactant>
    <organismsDiffer>false</organismsDiffer>
    <experiments>3</experiments>
</comment>
<comment type="interaction">
    <interactant intactId="EBI-740785">
        <id>P49639</id>
    </interactant>
    <interactant intactId="EBI-3918154">
        <id>Q9UGC6</id>
        <label>RGS17</label>
    </interactant>
    <organismsDiffer>false</organismsDiffer>
    <experiments>6</experiments>
</comment>
<comment type="interaction">
    <interactant intactId="EBI-740785">
        <id>P49639</id>
    </interactant>
    <interactant intactId="EBI-874907">
        <id>P49795</id>
        <label>RGS19</label>
    </interactant>
    <organismsDiffer>false</organismsDiffer>
    <experiments>3</experiments>
</comment>
<comment type="interaction">
    <interactant intactId="EBI-740785">
        <id>P49639</id>
    </interactant>
    <interactant intactId="EBI-1052678">
        <id>O76081</id>
        <label>RGS20</label>
    </interactant>
    <organismsDiffer>false</organismsDiffer>
    <experiments>5</experiments>
</comment>
<comment type="interaction">
    <interactant intactId="EBI-740785">
        <id>P49639</id>
    </interactant>
    <interactant intactId="EBI-10178530">
        <id>O76081-6</id>
        <label>RGS20</label>
    </interactant>
    <organismsDiffer>false</organismsDiffer>
    <experiments>3</experiments>
</comment>
<comment type="interaction">
    <interactant intactId="EBI-740785">
        <id>P49639</id>
    </interactant>
    <interactant intactId="EBI-751555">
        <id>Q9H0X6</id>
        <label>RNF208</label>
    </interactant>
    <organismsDiffer>false</organismsDiffer>
    <experiments>3</experiments>
</comment>
<comment type="interaction">
    <interactant intactId="EBI-740785">
        <id>P49639</id>
    </interactant>
    <interactant intactId="EBI-12009390">
        <id>Q6UXX9-2</id>
        <label>RSPO2</label>
    </interactant>
    <organismsDiffer>false</organismsDiffer>
    <experiments>3</experiments>
</comment>
<comment type="interaction">
    <interactant intactId="EBI-740785">
        <id>P49639</id>
    </interactant>
    <interactant intactId="EBI-5240240">
        <id>Q9BZR6</id>
        <label>RTN4R</label>
    </interactant>
    <organismsDiffer>false</organismsDiffer>
    <experiments>3</experiments>
</comment>
<comment type="interaction">
    <interactant intactId="EBI-740785">
        <id>P49639</id>
    </interactant>
    <interactant intactId="EBI-12000762">
        <id>Q7Z5V6-2</id>
        <label>SAXO4</label>
    </interactant>
    <organismsDiffer>false</organismsDiffer>
    <experiments>5</experiments>
</comment>
<comment type="interaction">
    <interactant intactId="EBI-740785">
        <id>P49639</id>
    </interactant>
    <interactant intactId="EBI-12844598">
        <id>P09683</id>
        <label>SCT</label>
    </interactant>
    <organismsDiffer>false</organismsDiffer>
    <experiments>3</experiments>
</comment>
<comment type="interaction">
    <interactant intactId="EBI-740785">
        <id>P49639</id>
    </interactant>
    <interactant intactId="EBI-727004">
        <id>O00560</id>
        <label>SDCBP</label>
    </interactant>
    <organismsDiffer>false</organismsDiffer>
    <experiments>6</experiments>
</comment>
<comment type="interaction">
    <interactant intactId="EBI-740785">
        <id>P49639</id>
    </interactant>
    <interactant intactId="EBI-12372219">
        <id>O15304-2</id>
        <label>SIVA1</label>
    </interactant>
    <organismsDiffer>false</organismsDiffer>
    <experiments>3</experiments>
</comment>
<comment type="interaction">
    <interactant intactId="EBI-740785">
        <id>P49639</id>
    </interactant>
    <interactant intactId="EBI-12179023">
        <id>Q8IY34</id>
        <label>SLC15A3</label>
    </interactant>
    <organismsDiffer>false</organismsDiffer>
    <experiments>3</experiments>
</comment>
<comment type="interaction">
    <interactant intactId="EBI-740785">
        <id>P49639</id>
    </interactant>
    <interactant intactId="EBI-11998660">
        <id>Q9UHI7-3</id>
        <label>SLC23A1</label>
    </interactant>
    <organismsDiffer>false</organismsDiffer>
    <experiments>3</experiments>
</comment>
<comment type="interaction">
    <interactant intactId="EBI-740785">
        <id>P49639</id>
    </interactant>
    <interactant intactId="EBI-947791">
        <id>O75093</id>
        <label>SLIT1</label>
    </interactant>
    <organismsDiffer>false</organismsDiffer>
    <experiments>4</experiments>
</comment>
<comment type="interaction">
    <interactant intactId="EBI-740785">
        <id>P49639</id>
    </interactant>
    <interactant intactId="EBI-355293">
        <id>P03973</id>
        <label>SLPI</label>
    </interactant>
    <organismsDiffer>false</organismsDiffer>
    <experiments>3</experiments>
</comment>
<comment type="interaction">
    <interactant intactId="EBI-740785">
        <id>P49639</id>
    </interactant>
    <interactant intactId="EBI-372475">
        <id>P14678-2</id>
        <label>SNRPB</label>
    </interactant>
    <organismsDiffer>false</organismsDiffer>
    <experiments>3</experiments>
</comment>
<comment type="interaction">
    <interactant intactId="EBI-740785">
        <id>P49639</id>
    </interactant>
    <interactant intactId="EBI-766589">
        <id>P09234</id>
        <label>SNRPC</label>
    </interactant>
    <organismsDiffer>false</organismsDiffer>
    <experiments>5</experiments>
</comment>
<comment type="interaction">
    <interactant intactId="EBI-740785">
        <id>P49639</id>
    </interactant>
    <interactant intactId="EBI-10696971">
        <id>Q7Z6I5</id>
        <label>SPATA12</label>
    </interactant>
    <organismsDiffer>false</organismsDiffer>
    <experiments>3</experiments>
</comment>
<comment type="interaction">
    <interactant intactId="EBI-740785">
        <id>P49639</id>
    </interactant>
    <interactant intactId="EBI-11334239">
        <id>Q8TC71</id>
        <label>SPATA18</label>
    </interactant>
    <organismsDiffer>false</organismsDiffer>
    <experiments>3</experiments>
</comment>
<comment type="interaction">
    <interactant intactId="EBI-740785">
        <id>P49639</id>
    </interactant>
    <interactant intactId="EBI-5235340">
        <id>Q7Z699</id>
        <label>SPRED1</label>
    </interactant>
    <organismsDiffer>false</organismsDiffer>
    <experiments>3</experiments>
</comment>
<comment type="interaction">
    <interactant intactId="EBI-740785">
        <id>P49639</id>
    </interactant>
    <interactant intactId="EBI-3866665">
        <id>O43609</id>
        <label>SPRY1</label>
    </interactant>
    <organismsDiffer>false</organismsDiffer>
    <experiments>8</experiments>
</comment>
<comment type="interaction">
    <interactant intactId="EBI-740785">
        <id>P49639</id>
    </interactant>
    <interactant intactId="EBI-12290641">
        <id>O43610</id>
        <label>SPRY3</label>
    </interactant>
    <organismsDiffer>false</organismsDiffer>
    <experiments>3</experiments>
</comment>
<comment type="interaction">
    <interactant intactId="EBI-740785">
        <id>P49639</id>
    </interactant>
    <interactant intactId="EBI-354861">
        <id>Q9C004</id>
        <label>SPRY4</label>
    </interactant>
    <organismsDiffer>false</organismsDiffer>
    <experiments>3</experiments>
</comment>
<comment type="interaction">
    <interactant intactId="EBI-740785">
        <id>P49639</id>
    </interactant>
    <interactant intactId="EBI-12231891">
        <id>Q9Y2M2-2</id>
        <label>SSUH2</label>
    </interactant>
    <organismsDiffer>false</organismsDiffer>
    <experiments>5</experiments>
</comment>
<comment type="interaction">
    <interactant intactId="EBI-740785">
        <id>P49639</id>
    </interactant>
    <interactant intactId="EBI-714135">
        <id>O75558</id>
        <label>STX11</label>
    </interactant>
    <organismsDiffer>false</organismsDiffer>
    <experiments>3</experiments>
</comment>
<comment type="interaction">
    <interactant intactId="EBI-740785">
        <id>P49639</id>
    </interactant>
    <interactant intactId="EBI-349968">
        <id>O43463</id>
        <label>SUV39H1</label>
    </interactant>
    <organismsDiffer>false</organismsDiffer>
    <experiments>2</experiments>
</comment>
<comment type="interaction">
    <interactant intactId="EBI-740785">
        <id>P49639</id>
    </interactant>
    <interactant intactId="EBI-10261452">
        <id>Q8IV04</id>
        <label>TBC1D10C</label>
    </interactant>
    <organismsDiffer>false</organismsDiffer>
    <experiments>6</experiments>
</comment>
<comment type="interaction">
    <interactant intactId="EBI-740785">
        <id>P49639</id>
    </interactant>
    <interactant intactId="EBI-10191361">
        <id>Q96SF7</id>
        <label>TBX15</label>
    </interactant>
    <organismsDiffer>false</organismsDiffer>
    <experiments>3</experiments>
</comment>
<comment type="interaction">
    <interactant intactId="EBI-740785">
        <id>P49639</id>
    </interactant>
    <interactant intactId="EBI-7413767">
        <id>Q9Y242</id>
        <label>TCF19</label>
    </interactant>
    <organismsDiffer>false</organismsDiffer>
    <experiments>3</experiments>
</comment>
<comment type="interaction">
    <interactant intactId="EBI-740785">
        <id>P49639</id>
    </interactant>
    <interactant intactId="EBI-750487">
        <id>Q8WW24</id>
        <label>TEKT4</label>
    </interactant>
    <organismsDiffer>false</organismsDiffer>
    <experiments>3</experiments>
</comment>
<comment type="interaction">
    <interactant intactId="EBI-740785">
        <id>P49639</id>
    </interactant>
    <interactant intactId="EBI-10239812">
        <id>Q96M29</id>
        <label>TEKT5</label>
    </interactant>
    <organismsDiffer>false</organismsDiffer>
    <experiments>3</experiments>
</comment>
<comment type="interaction">
    <interactant intactId="EBI-740785">
        <id>P49639</id>
    </interactant>
    <interactant intactId="EBI-779636">
        <id>P01137</id>
        <label>TGFB1</label>
    </interactant>
    <organismsDiffer>false</organismsDiffer>
    <experiments>3</experiments>
</comment>
<comment type="interaction">
    <interactant intactId="EBI-740785">
        <id>P49639</id>
    </interactant>
    <interactant intactId="EBI-12029034">
        <id>Q96PF1</id>
        <label>TGM7</label>
    </interactant>
    <organismsDiffer>false</organismsDiffer>
    <experiments>3</experiments>
</comment>
<comment type="interaction">
    <interactant intactId="EBI-740785">
        <id>P49639</id>
    </interactant>
    <interactant intactId="EBI-741350">
        <id>Q9BT49</id>
        <label>THAP7</label>
    </interactant>
    <organismsDiffer>false</organismsDiffer>
    <experiments>3</experiments>
</comment>
<comment type="interaction">
    <interactant intactId="EBI-740785">
        <id>P49639</id>
    </interactant>
    <interactant intactId="EBI-11741437">
        <id>Q08117-2</id>
        <label>TLE5</label>
    </interactant>
    <organismsDiffer>false</organismsDiffer>
    <experiments>3</experiments>
</comment>
<comment type="interaction">
    <interactant intactId="EBI-740785">
        <id>P49639</id>
    </interactant>
    <interactant intactId="EBI-11997340">
        <id>P0DTL5</id>
        <label>TMEM276</label>
    </interactant>
    <organismsDiffer>false</organismsDiffer>
    <experiments>3</experiments>
</comment>
<comment type="interaction">
    <interactant intactId="EBI-740785">
        <id>P49639</id>
    </interactant>
    <interactant intactId="EBI-949753">
        <id>Q63HR2</id>
        <label>TNS2</label>
    </interactant>
    <organismsDiffer>false</organismsDiffer>
    <experiments>3</experiments>
</comment>
<comment type="interaction">
    <interactant intactId="EBI-740785">
        <id>P49639</id>
    </interactant>
    <interactant intactId="EBI-359224">
        <id>Q13077</id>
        <label>TRAF1</label>
    </interactant>
    <organismsDiffer>false</organismsDiffer>
    <experiments>3</experiments>
</comment>
<comment type="interaction">
    <interactant intactId="EBI-740785">
        <id>P49639</id>
    </interactant>
    <interactant intactId="EBI-355744">
        <id>Q12933</id>
        <label>TRAF2</label>
    </interactant>
    <organismsDiffer>false</organismsDiffer>
    <experiments>3</experiments>
</comment>
<comment type="interaction">
    <interactant intactId="EBI-740785">
        <id>P49639</id>
    </interactant>
    <interactant intactId="EBI-3650647">
        <id>Q9BUZ4</id>
        <label>TRAF4</label>
    </interactant>
    <organismsDiffer>false</organismsDiffer>
    <experiments>3</experiments>
</comment>
<comment type="interaction">
    <interactant intactId="EBI-740785">
        <id>P49639</id>
    </interactant>
    <interactant intactId="EBI-5235829">
        <id>Q8IWZ5</id>
        <label>TRIM42</label>
    </interactant>
    <organismsDiffer>false</organismsDiffer>
    <experiments>12</experiments>
</comment>
<comment type="interaction">
    <interactant intactId="EBI-740785">
        <id>P49639</id>
    </interactant>
    <interactant intactId="EBI-2340370">
        <id>Q9BZR9</id>
        <label>TRIM8</label>
    </interactant>
    <organismsDiffer>false</organismsDiffer>
    <experiments>3</experiments>
</comment>
<comment type="interaction">
    <interactant intactId="EBI-740785">
        <id>P49639</id>
    </interactant>
    <interactant intactId="EBI-8652667">
        <id>O14817</id>
        <label>TSPAN4</label>
    </interactant>
    <organismsDiffer>false</organismsDiffer>
    <experiments>3</experiments>
</comment>
<comment type="interaction">
    <interactant intactId="EBI-740785">
        <id>P49639</id>
    </interactant>
    <interactant intactId="EBI-607755">
        <id>Q9BZL1</id>
        <label>UBL5</label>
    </interactant>
    <organismsDiffer>false</organismsDiffer>
    <experiments>3</experiments>
</comment>
<comment type="interaction">
    <interactant intactId="EBI-740785">
        <id>P49639</id>
    </interactant>
    <interactant intactId="EBI-12817837">
        <id>Q9H9P5-5</id>
        <label>UNKL</label>
    </interactant>
    <organismsDiffer>false</organismsDiffer>
    <experiments>3</experiments>
</comment>
<comment type="interaction">
    <interactant intactId="EBI-740785">
        <id>P49639</id>
    </interactant>
    <interactant intactId="EBI-10249550">
        <id>Q6EMK4</id>
        <label>VASN</label>
    </interactant>
    <organismsDiffer>false</organismsDiffer>
    <experiments>5</experiments>
</comment>
<comment type="interaction">
    <interactant intactId="EBI-740785">
        <id>P49639</id>
    </interactant>
    <interactant intactId="EBI-11957238">
        <id>Q2TAL6</id>
        <label>VWC2</label>
    </interactant>
    <organismsDiffer>false</organismsDiffer>
    <experiments>6</experiments>
</comment>
<comment type="interaction">
    <interactant intactId="EBI-740785">
        <id>P49639</id>
    </interactant>
    <interactant intactId="EBI-11747707">
        <id>B2RUY7</id>
        <label>VWC2L</label>
    </interactant>
    <organismsDiffer>false</organismsDiffer>
    <experiments>3</experiments>
</comment>
<comment type="interaction">
    <interactant intactId="EBI-740785">
        <id>P49639</id>
    </interactant>
    <interactant intactId="EBI-7705033">
        <id>Q9BRX9</id>
        <label>WDR83</label>
    </interactant>
    <organismsDiffer>false</organismsDiffer>
    <experiments>3</experiments>
</comment>
<comment type="interaction">
    <interactant intactId="EBI-740785">
        <id>P49639</id>
    </interactant>
    <interactant intactId="EBI-12040603">
        <id>Q9NZC7-5</id>
        <label>WWOX</label>
    </interactant>
    <organismsDiffer>false</organismsDiffer>
    <experiments>3</experiments>
</comment>
<comment type="interaction">
    <interactant intactId="EBI-740785">
        <id>P49639</id>
    </interactant>
    <interactant intactId="EBI-743787">
        <id>Q9GZM5</id>
        <label>YIPF3</label>
    </interactant>
    <organismsDiffer>false</organismsDiffer>
    <experiments>3</experiments>
</comment>
<comment type="interaction">
    <interactant intactId="EBI-740785">
        <id>P49639</id>
    </interactant>
    <interactant intactId="EBI-711925">
        <id>Q05516</id>
        <label>ZBTB16</label>
    </interactant>
    <organismsDiffer>false</organismsDiffer>
    <experiments>3</experiments>
</comment>
<comment type="interaction">
    <interactant intactId="EBI-740785">
        <id>P49639</id>
    </interactant>
    <interactant intactId="EBI-11962760">
        <id>Q9NZV7</id>
        <label>ZIM2</label>
    </interactant>
    <organismsDiffer>false</organismsDiffer>
    <experiments>3</experiments>
</comment>
<comment type="interaction">
    <interactant intactId="EBI-740785">
        <id>P49639</id>
    </interactant>
    <interactant intactId="EBI-740727">
        <id>Q8TAU3</id>
        <label>ZNF417</label>
    </interactant>
    <organismsDiffer>false</organismsDiffer>
    <experiments>5</experiments>
</comment>
<comment type="interaction">
    <interactant intactId="EBI-740785">
        <id>P49639</id>
    </interactant>
    <interactant intactId="EBI-6427977">
        <id>Q96SQ5</id>
        <label>ZNF587</label>
    </interactant>
    <organismsDiffer>false</organismsDiffer>
    <experiments>5</experiments>
</comment>
<comment type="interaction">
    <interactant intactId="EBI-740785">
        <id>P49639</id>
    </interactant>
    <interactant intactId="EBI-4395732">
        <id>P0C7X2</id>
        <label>ZNF688</label>
    </interactant>
    <organismsDiffer>false</organismsDiffer>
    <experiments>3</experiments>
</comment>
<comment type="interaction">
    <interactant intactId="EBI-740785">
        <id>P49639</id>
    </interactant>
    <interactant intactId="EBI-3957070">
        <id>Q9H7S9</id>
        <label>ZNF703</label>
    </interactant>
    <organismsDiffer>false</organismsDiffer>
    <experiments>2</experiments>
</comment>
<comment type="interaction">
    <interactant intactId="EBI-740785">
        <id>P49639</id>
    </interactant>
    <interactant intactId="EBI-10251462">
        <id>Q6NX45</id>
        <label>ZNF774</label>
    </interactant>
    <organismsDiffer>false</organismsDiffer>
    <experiments>3</experiments>
</comment>
<comment type="interaction">
    <interactant intactId="EBI-740785">
        <id>P49639</id>
    </interactant>
    <interactant intactId="EBI-11962574">
        <id>Q96EG3</id>
        <label>ZNF837</label>
    </interactant>
    <organismsDiffer>false</organismsDiffer>
    <experiments>5</experiments>
</comment>
<comment type="interaction">
    <interactant intactId="EBI-740785">
        <id>P49639</id>
    </interactant>
    <interactant intactId="EBI-6428016">
        <id>Q8N446</id>
        <label>ZNF843</label>
    </interactant>
    <organismsDiffer>false</organismsDiffer>
    <experiments>3</experiments>
</comment>
<comment type="interaction">
    <interactant intactId="EBI-740785">
        <id>P49639</id>
    </interactant>
    <interactant intactId="EBI-10211777">
        <id>A0A384ME25</id>
    </interactant>
    <organismsDiffer>false</organismsDiffer>
    <experiments>3</experiments>
</comment>
<comment type="interaction">
    <interactant intactId="EBI-740785">
        <id>P49639</id>
    </interactant>
    <interactant intactId="EBI-9088990">
        <id>Q7Z783</id>
    </interactant>
    <organismsDiffer>false</organismsDiffer>
    <experiments>6</experiments>
</comment>
<comment type="interaction">
    <interactant intactId="EBI-740785">
        <id>P49639</id>
    </interactant>
    <interactant intactId="EBI-3957603">
        <id>P09022</id>
        <label>Hoxa1</label>
    </interactant>
    <organismsDiffer>true</organismsDiffer>
    <experiments>4</experiments>
</comment>
<comment type="subcellular location">
    <subcellularLocation>
        <location evidence="1">Nucleus</location>
    </subcellularLocation>
</comment>
<comment type="alternative products">
    <event type="alternative splicing"/>
    <isoform>
        <id>P49639-1</id>
        <name>3</name>
        <name>36 kDa</name>
        <sequence type="displayed"/>
    </isoform>
    <isoform>
        <id>P49639-2</id>
        <name>1</name>
        <name>14 kDa</name>
        <sequence type="described" ref="VSP_002376 VSP_002377"/>
    </isoform>
    <isoform>
        <id>P49639-3</id>
        <name>2</name>
        <name>24 kDa</name>
        <sequence type="described" ref="VSP_002378 VSP_002379"/>
    </isoform>
</comment>
<comment type="disease" evidence="8">
    <disease id="DI-01193">
        <name>Athabaskan brainstem dysgenesis syndrome</name>
        <acronym>ABDS</acronym>
        <description>Characterized by horizontal gaze palsy, sensorineural deafness, central hypoventilation, and developmental delay. Some patients had swallowing dysfunction, vocal cord paralysis, facial paresis, seizures, and cardiac outflow tract anomalies.</description>
        <dbReference type="MIM" id="601536"/>
    </disease>
    <text>The disease is caused by variants affecting the gene represented in this entry.</text>
</comment>
<comment type="disease">
    <disease id="DI-01290">
        <name>Bosley-Salih-Alorainy syndrome</name>
        <acronym>BSAS</acronym>
        <description>A disease characterized by horizontal gaze abnormalities, deafness, facial weakness, vascular malformations of the internal carotid arteries and cardiac outflow trac. Some patients manifest intellectual disability and autism spectrum disorder. Affected individuals do not suffer from central hypoventilation.</description>
        <dbReference type="MIM" id="601536"/>
    </disease>
    <text>The disease is caused by variants affecting the gene represented in this entry.</text>
</comment>
<comment type="miscellaneous">
    <molecule>Isoform 1</molecule>
    <text evidence="14">Lacks the homeobox domain.</text>
</comment>
<comment type="miscellaneous">
    <molecule>Isoform 2</molecule>
    <text evidence="14">Lacks the homeobox domain.</text>
</comment>
<comment type="similarity">
    <text evidence="14">Belongs to the Antp homeobox family. Labial subfamily.</text>
</comment>
<gene>
    <name type="primary">HOXA1</name>
    <name type="synonym">HOX1F</name>
</gene>